<evidence type="ECO:0000250" key="1"/>
<evidence type="ECO:0000250" key="2">
    <source>
        <dbReference type="UniProtKB" id="P04157"/>
    </source>
</evidence>
<evidence type="ECO:0000250" key="3">
    <source>
        <dbReference type="UniProtKB" id="P06800"/>
    </source>
</evidence>
<evidence type="ECO:0000255" key="4"/>
<evidence type="ECO:0000255" key="5">
    <source>
        <dbReference type="PROSITE-ProRule" id="PRU00160"/>
    </source>
</evidence>
<evidence type="ECO:0000255" key="6">
    <source>
        <dbReference type="PROSITE-ProRule" id="PRU00316"/>
    </source>
</evidence>
<evidence type="ECO:0000255" key="7">
    <source>
        <dbReference type="PROSITE-ProRule" id="PRU10044"/>
    </source>
</evidence>
<evidence type="ECO:0000256" key="8">
    <source>
        <dbReference type="SAM" id="MobiDB-lite"/>
    </source>
</evidence>
<evidence type="ECO:0000269" key="9">
    <source>
    </source>
</evidence>
<evidence type="ECO:0000269" key="10">
    <source>
    </source>
</evidence>
<evidence type="ECO:0000269" key="11">
    <source>
    </source>
</evidence>
<evidence type="ECO:0000269" key="12">
    <source>
    </source>
</evidence>
<evidence type="ECO:0000269" key="13">
    <source>
    </source>
</evidence>
<evidence type="ECO:0000269" key="14">
    <source>
    </source>
</evidence>
<evidence type="ECO:0000269" key="15">
    <source>
    </source>
</evidence>
<evidence type="ECO:0000269" key="16">
    <source>
    </source>
</evidence>
<evidence type="ECO:0000269" key="17">
    <source>
    </source>
</evidence>
<evidence type="ECO:0000269" key="18">
    <source>
    </source>
</evidence>
<evidence type="ECO:0000269" key="19">
    <source>
    </source>
</evidence>
<evidence type="ECO:0000269" key="20">
    <source>
    </source>
</evidence>
<evidence type="ECO:0000269" key="21">
    <source>
    </source>
</evidence>
<evidence type="ECO:0000269" key="22">
    <source>
    </source>
</evidence>
<evidence type="ECO:0000269" key="23">
    <source>
    </source>
</evidence>
<evidence type="ECO:0000269" key="24">
    <source>
    </source>
</evidence>
<evidence type="ECO:0000303" key="25">
    <source>
    </source>
</evidence>
<evidence type="ECO:0000303" key="26">
    <source>
    </source>
</evidence>
<evidence type="ECO:0000305" key="27"/>
<evidence type="ECO:0000312" key="28">
    <source>
        <dbReference type="HGNC" id="HGNC:9666"/>
    </source>
</evidence>
<evidence type="ECO:0007744" key="29">
    <source>
    </source>
</evidence>
<evidence type="ECO:0007744" key="30">
    <source>
    </source>
</evidence>
<evidence type="ECO:0007744" key="31">
    <source>
    </source>
</evidence>
<evidence type="ECO:0007829" key="32">
    <source>
        <dbReference type="PDB" id="1YGR"/>
    </source>
</evidence>
<evidence type="ECO:0007829" key="33">
    <source>
        <dbReference type="PDB" id="5FMV"/>
    </source>
</evidence>
<evidence type="ECO:0007829" key="34">
    <source>
        <dbReference type="PDB" id="5FN7"/>
    </source>
</evidence>
<sequence length="1306" mass="147486">MTMYLWLKLLAFGFAFLDTEVFVTGQSPTPSPTGLTTAKMPSVPLSSDPLPTHTTAFSPASTFERENDFSETTTSLSPDNTSTQVSPDSLDNASAFNTTGVSSVQTPHLPTHADSQTPSAGTDTQTFSGSAANAKLNPTPGSNAISDVPGERSTASTFPTDPVSPLTTTLSLAHHSSAALPARTSNTTITANTSDAYLNASETTTLSPSGSAVISTTTIATTPSKPTCDEKYANITVDYLYNKETKLFTAKLNVNENVECGNNTCTNNEVHNLTECKNASVSISHNSCTAPDKTLILDVPPGVEKFQLHDCTQVEKADTTICLKWKNIETFTCDTQNITYRFQCGNMIFDNKEIKLENLEPEHEYKCDSEILYNNHKFTNASKIIKTDFGSPGEPQIIFCRSEAAHQGVITWNPPQRSFHNFTLCYIKETEKDCLNLDKNLIKYDLQNLKPYTKYVLSLHAYIIAKVQRNGSAAMCHFTTKSAPPSQVWNMTVSMTSDNSMHVKCRPPRDRNGPHERYHLEVEAGNTLVRNESHKNCDFRVKDLQYSTDYTFKAYFHNGDYPGEPFILHHSTSYNSKALIAFLAFLIIVTSIALLVVLYKIYDLHKKRSCNLDEQQELVERDDEKQLMNVEPIHADILLETYKRKIADEGRLFLAEFQSIPRVFSKFPIKEARKPFNQNKNRYVDILPYDYNRVELSEINGDAGSNYINASYIDGFKEPRKYIAAQGPRDETVDDFWRMIWEQKATVIVMVTRCEEGNRNKCAEYWPSMEEGTRAFGDVVVKINQHKRCPDYIIQKLNIVNKKEKATGREVTHIQFTSWPDHGVPEDPHLLLKLRRRVNAFSNFFSGPIVVHCSAGVGRTGTYIGIDAMLEGLEAENKVDVYGYVVKLRRQRCLMVQVEAQYILIHQALVEYNQFGETEVNLSELHPYLHNMKKRDPPSEPSPLEAEFQRLPSYRSWRTQHIGNQEENKSKNRNSNVIPYDYNRVPLKHELEMSKESEHDSDESSDDDSDSEEPSKYINASFIMSYWKPEVMIAAQGPLKETIGDFWQMIFQRKVKVIVMLTELKHGDQEICAQYWGEGKQTYGDIEVDLKDTDKSSTYTLRVFELRHSKRKDSRTVYQYQYTNWSVEQLPAEPKELISMIQVVKQKLPQKNSSEGNKHHKSTPLLIHCRDGSQQTGIFCALLNLLESAETEEVVDIFQVVKALRKARPGMVSTFEQYQFLYDVIASTYPAQNGQVKKNNHQEDKIEFDNEVDKVKQDANCVNPLGAPEKLPEAKEQAEGSEPTSGTEGPEHSVNGPASPALNQGS</sequence>
<reference key="1">
    <citation type="journal article" date="1987" name="J. Exp. Med.">
        <title>Differential usage of three exons generates at least five different mRNAs encoding human leukocyte common antigens.</title>
        <authorList>
            <person name="Streuli M."/>
            <person name="Hall L.R."/>
            <person name="Saga Y."/>
            <person name="Schlossman S.F."/>
            <person name="Saito H."/>
        </authorList>
    </citation>
    <scope>NUCLEOTIDE SEQUENCE [MRNA] (ISOFORM 1)</scope>
    <scope>ALTERNATIVE SPLICING</scope>
    <source>
        <tissue>Lymphocyte</tissue>
    </source>
</reference>
<reference key="2">
    <citation type="journal article" date="1987" name="EMBO J.">
        <title>Structural variants of human T200 glycoprotein (leukocyte-common antigen).</title>
        <authorList>
            <person name="Ralph S.J."/>
            <person name="Thomas M.L."/>
            <person name="Morton C.C."/>
            <person name="Trowbridge I.S."/>
        </authorList>
    </citation>
    <scope>NUCLEOTIDE SEQUENCE [MRNA] (ISOFORM 2)</scope>
    <scope>ALTERNATIVE SPLICING</scope>
</reference>
<reference key="3">
    <citation type="journal article" date="2004" name="Nat. Genet.">
        <title>Complete sequencing and characterization of 21,243 full-length human cDNAs.</title>
        <authorList>
            <person name="Ota T."/>
            <person name="Suzuki Y."/>
            <person name="Nishikawa T."/>
            <person name="Otsuki T."/>
            <person name="Sugiyama T."/>
            <person name="Irie R."/>
            <person name="Wakamatsu A."/>
            <person name="Hayashi K."/>
            <person name="Sato H."/>
            <person name="Nagai K."/>
            <person name="Kimura K."/>
            <person name="Makita H."/>
            <person name="Sekine M."/>
            <person name="Obayashi M."/>
            <person name="Nishi T."/>
            <person name="Shibahara T."/>
            <person name="Tanaka T."/>
            <person name="Ishii S."/>
            <person name="Yamamoto J."/>
            <person name="Saito K."/>
            <person name="Kawai Y."/>
            <person name="Isono Y."/>
            <person name="Nakamura Y."/>
            <person name="Nagahari K."/>
            <person name="Murakami K."/>
            <person name="Yasuda T."/>
            <person name="Iwayanagi T."/>
            <person name="Wagatsuma M."/>
            <person name="Shiratori A."/>
            <person name="Sudo H."/>
            <person name="Hosoiri T."/>
            <person name="Kaku Y."/>
            <person name="Kodaira H."/>
            <person name="Kondo H."/>
            <person name="Sugawara M."/>
            <person name="Takahashi M."/>
            <person name="Kanda K."/>
            <person name="Yokoi T."/>
            <person name="Furuya T."/>
            <person name="Kikkawa E."/>
            <person name="Omura Y."/>
            <person name="Abe K."/>
            <person name="Kamihara K."/>
            <person name="Katsuta N."/>
            <person name="Sato K."/>
            <person name="Tanikawa M."/>
            <person name="Yamazaki M."/>
            <person name="Ninomiya K."/>
            <person name="Ishibashi T."/>
            <person name="Yamashita H."/>
            <person name="Murakawa K."/>
            <person name="Fujimori K."/>
            <person name="Tanai H."/>
            <person name="Kimata M."/>
            <person name="Watanabe M."/>
            <person name="Hiraoka S."/>
            <person name="Chiba Y."/>
            <person name="Ishida S."/>
            <person name="Ono Y."/>
            <person name="Takiguchi S."/>
            <person name="Watanabe S."/>
            <person name="Yosida M."/>
            <person name="Hotuta T."/>
            <person name="Kusano J."/>
            <person name="Kanehori K."/>
            <person name="Takahashi-Fujii A."/>
            <person name="Hara H."/>
            <person name="Tanase T.-O."/>
            <person name="Nomura Y."/>
            <person name="Togiya S."/>
            <person name="Komai F."/>
            <person name="Hara R."/>
            <person name="Takeuchi K."/>
            <person name="Arita M."/>
            <person name="Imose N."/>
            <person name="Musashino K."/>
            <person name="Yuuki H."/>
            <person name="Oshima A."/>
            <person name="Sasaki N."/>
            <person name="Aotsuka S."/>
            <person name="Yoshikawa Y."/>
            <person name="Matsunawa H."/>
            <person name="Ichihara T."/>
            <person name="Shiohata N."/>
            <person name="Sano S."/>
            <person name="Moriya S."/>
            <person name="Momiyama H."/>
            <person name="Satoh N."/>
            <person name="Takami S."/>
            <person name="Terashima Y."/>
            <person name="Suzuki O."/>
            <person name="Nakagawa S."/>
            <person name="Senoh A."/>
            <person name="Mizoguchi H."/>
            <person name="Goto Y."/>
            <person name="Shimizu F."/>
            <person name="Wakebe H."/>
            <person name="Hishigaki H."/>
            <person name="Watanabe T."/>
            <person name="Sugiyama A."/>
            <person name="Takemoto M."/>
            <person name="Kawakami B."/>
            <person name="Yamazaki M."/>
            <person name="Watanabe K."/>
            <person name="Kumagai A."/>
            <person name="Itakura S."/>
            <person name="Fukuzumi Y."/>
            <person name="Fujimori Y."/>
            <person name="Komiyama M."/>
            <person name="Tashiro H."/>
            <person name="Tanigami A."/>
            <person name="Fujiwara T."/>
            <person name="Ono T."/>
            <person name="Yamada K."/>
            <person name="Fujii Y."/>
            <person name="Ozaki K."/>
            <person name="Hirao M."/>
            <person name="Ohmori Y."/>
            <person name="Kawabata A."/>
            <person name="Hikiji T."/>
            <person name="Kobatake N."/>
            <person name="Inagaki H."/>
            <person name="Ikema Y."/>
            <person name="Okamoto S."/>
            <person name="Okitani R."/>
            <person name="Kawakami T."/>
            <person name="Noguchi S."/>
            <person name="Itoh T."/>
            <person name="Shigeta K."/>
            <person name="Senba T."/>
            <person name="Matsumura K."/>
            <person name="Nakajima Y."/>
            <person name="Mizuno T."/>
            <person name="Morinaga M."/>
            <person name="Sasaki M."/>
            <person name="Togashi T."/>
            <person name="Oyama M."/>
            <person name="Hata H."/>
            <person name="Watanabe M."/>
            <person name="Komatsu T."/>
            <person name="Mizushima-Sugano J."/>
            <person name="Satoh T."/>
            <person name="Shirai Y."/>
            <person name="Takahashi Y."/>
            <person name="Nakagawa K."/>
            <person name="Okumura K."/>
            <person name="Nagase T."/>
            <person name="Nomura N."/>
            <person name="Kikuchi H."/>
            <person name="Masuho Y."/>
            <person name="Yamashita R."/>
            <person name="Nakai K."/>
            <person name="Yada T."/>
            <person name="Nakamura Y."/>
            <person name="Ohara O."/>
            <person name="Isogai T."/>
            <person name="Sugano S."/>
        </authorList>
    </citation>
    <scope>NUCLEOTIDE SEQUENCE [LARGE SCALE MRNA] (ISOFORM 2)</scope>
    <source>
        <tissue>Synovium</tissue>
    </source>
</reference>
<reference key="4">
    <citation type="journal article" date="2006" name="Nature">
        <title>The DNA sequence and biological annotation of human chromosome 1.</title>
        <authorList>
            <person name="Gregory S.G."/>
            <person name="Barlow K.F."/>
            <person name="McLay K.E."/>
            <person name="Kaul R."/>
            <person name="Swarbreck D."/>
            <person name="Dunham A."/>
            <person name="Scott C.E."/>
            <person name="Howe K.L."/>
            <person name="Woodfine K."/>
            <person name="Spencer C.C.A."/>
            <person name="Jones M.C."/>
            <person name="Gillson C."/>
            <person name="Searle S."/>
            <person name="Zhou Y."/>
            <person name="Kokocinski F."/>
            <person name="McDonald L."/>
            <person name="Evans R."/>
            <person name="Phillips K."/>
            <person name="Atkinson A."/>
            <person name="Cooper R."/>
            <person name="Jones C."/>
            <person name="Hall R.E."/>
            <person name="Andrews T.D."/>
            <person name="Lloyd C."/>
            <person name="Ainscough R."/>
            <person name="Almeida J.P."/>
            <person name="Ambrose K.D."/>
            <person name="Anderson F."/>
            <person name="Andrew R.W."/>
            <person name="Ashwell R.I.S."/>
            <person name="Aubin K."/>
            <person name="Babbage A.K."/>
            <person name="Bagguley C.L."/>
            <person name="Bailey J."/>
            <person name="Beasley H."/>
            <person name="Bethel G."/>
            <person name="Bird C.P."/>
            <person name="Bray-Allen S."/>
            <person name="Brown J.Y."/>
            <person name="Brown A.J."/>
            <person name="Buckley D."/>
            <person name="Burton J."/>
            <person name="Bye J."/>
            <person name="Carder C."/>
            <person name="Chapman J.C."/>
            <person name="Clark S.Y."/>
            <person name="Clarke G."/>
            <person name="Clee C."/>
            <person name="Cobley V."/>
            <person name="Collier R.E."/>
            <person name="Corby N."/>
            <person name="Coville G.J."/>
            <person name="Davies J."/>
            <person name="Deadman R."/>
            <person name="Dunn M."/>
            <person name="Earthrowl M."/>
            <person name="Ellington A.G."/>
            <person name="Errington H."/>
            <person name="Frankish A."/>
            <person name="Frankland J."/>
            <person name="French L."/>
            <person name="Garner P."/>
            <person name="Garnett J."/>
            <person name="Gay L."/>
            <person name="Ghori M.R.J."/>
            <person name="Gibson R."/>
            <person name="Gilby L.M."/>
            <person name="Gillett W."/>
            <person name="Glithero R.J."/>
            <person name="Grafham D.V."/>
            <person name="Griffiths C."/>
            <person name="Griffiths-Jones S."/>
            <person name="Grocock R."/>
            <person name="Hammond S."/>
            <person name="Harrison E.S.I."/>
            <person name="Hart E."/>
            <person name="Haugen E."/>
            <person name="Heath P.D."/>
            <person name="Holmes S."/>
            <person name="Holt K."/>
            <person name="Howden P.J."/>
            <person name="Hunt A.R."/>
            <person name="Hunt S.E."/>
            <person name="Hunter G."/>
            <person name="Isherwood J."/>
            <person name="James R."/>
            <person name="Johnson C."/>
            <person name="Johnson D."/>
            <person name="Joy A."/>
            <person name="Kay M."/>
            <person name="Kershaw J.K."/>
            <person name="Kibukawa M."/>
            <person name="Kimberley A.M."/>
            <person name="King A."/>
            <person name="Knights A.J."/>
            <person name="Lad H."/>
            <person name="Laird G."/>
            <person name="Lawlor S."/>
            <person name="Leongamornlert D.A."/>
            <person name="Lloyd D.M."/>
            <person name="Loveland J."/>
            <person name="Lovell J."/>
            <person name="Lush M.J."/>
            <person name="Lyne R."/>
            <person name="Martin S."/>
            <person name="Mashreghi-Mohammadi M."/>
            <person name="Matthews L."/>
            <person name="Matthews N.S.W."/>
            <person name="McLaren S."/>
            <person name="Milne S."/>
            <person name="Mistry S."/>
            <person name="Moore M.J.F."/>
            <person name="Nickerson T."/>
            <person name="O'Dell C.N."/>
            <person name="Oliver K."/>
            <person name="Palmeiri A."/>
            <person name="Palmer S.A."/>
            <person name="Parker A."/>
            <person name="Patel D."/>
            <person name="Pearce A.V."/>
            <person name="Peck A.I."/>
            <person name="Pelan S."/>
            <person name="Phelps K."/>
            <person name="Phillimore B.J."/>
            <person name="Plumb R."/>
            <person name="Rajan J."/>
            <person name="Raymond C."/>
            <person name="Rouse G."/>
            <person name="Saenphimmachak C."/>
            <person name="Sehra H.K."/>
            <person name="Sheridan E."/>
            <person name="Shownkeen R."/>
            <person name="Sims S."/>
            <person name="Skuce C.D."/>
            <person name="Smith M."/>
            <person name="Steward C."/>
            <person name="Subramanian S."/>
            <person name="Sycamore N."/>
            <person name="Tracey A."/>
            <person name="Tromans A."/>
            <person name="Van Helmond Z."/>
            <person name="Wall M."/>
            <person name="Wallis J.M."/>
            <person name="White S."/>
            <person name="Whitehead S.L."/>
            <person name="Wilkinson J.E."/>
            <person name="Willey D.L."/>
            <person name="Williams H."/>
            <person name="Wilming L."/>
            <person name="Wray P.W."/>
            <person name="Wu Z."/>
            <person name="Coulson A."/>
            <person name="Vaudin M."/>
            <person name="Sulston J.E."/>
            <person name="Durbin R.M."/>
            <person name="Hubbard T."/>
            <person name="Wooster R."/>
            <person name="Dunham I."/>
            <person name="Carter N.P."/>
            <person name="McVean G."/>
            <person name="Ross M.T."/>
            <person name="Harrow J."/>
            <person name="Olson M.V."/>
            <person name="Beck S."/>
            <person name="Rogers J."/>
            <person name="Bentley D.R."/>
        </authorList>
    </citation>
    <scope>NUCLEOTIDE SEQUENCE [LARGE SCALE GENOMIC DNA]</scope>
</reference>
<reference key="5">
    <citation type="submission" date="2005-07" db="EMBL/GenBank/DDBJ databases">
        <authorList>
            <person name="Mural R.J."/>
            <person name="Istrail S."/>
            <person name="Sutton G.G."/>
            <person name="Florea L."/>
            <person name="Halpern A.L."/>
            <person name="Mobarry C.M."/>
            <person name="Lippert R."/>
            <person name="Walenz B."/>
            <person name="Shatkay H."/>
            <person name="Dew I."/>
            <person name="Miller J.R."/>
            <person name="Flanigan M.J."/>
            <person name="Edwards N.J."/>
            <person name="Bolanos R."/>
            <person name="Fasulo D."/>
            <person name="Halldorsson B.V."/>
            <person name="Hannenhalli S."/>
            <person name="Turner R."/>
            <person name="Yooseph S."/>
            <person name="Lu F."/>
            <person name="Nusskern D.R."/>
            <person name="Shue B.C."/>
            <person name="Zheng X.H."/>
            <person name="Zhong F."/>
            <person name="Delcher A.L."/>
            <person name="Huson D.H."/>
            <person name="Kravitz S.A."/>
            <person name="Mouchard L."/>
            <person name="Reinert K."/>
            <person name="Remington K.A."/>
            <person name="Clark A.G."/>
            <person name="Waterman M.S."/>
            <person name="Eichler E.E."/>
            <person name="Adams M.D."/>
            <person name="Hunkapiller M.W."/>
            <person name="Myers E.W."/>
            <person name="Venter J.C."/>
        </authorList>
    </citation>
    <scope>NUCLEOTIDE SEQUENCE [LARGE SCALE GENOMIC DNA]</scope>
</reference>
<reference key="6">
    <citation type="journal article" date="1989" name="Mol. Cell. Biol.">
        <title>Integrity of the exon 6 sequence is essential for tissue-specific alternative splicing of human leukocyte common antigen pre-mRNA.</title>
        <authorList>
            <person name="Tsai A.Y.M."/>
            <person name="Streuli M."/>
            <person name="Saito H."/>
        </authorList>
    </citation>
    <scope>NUCLEOTIDE SEQUENCE [GENOMIC DNA] OF 148-194</scope>
</reference>
<reference key="7">
    <citation type="journal article" date="1988" name="J. Immunol.">
        <title>Complete exon-intron organization of the human leukocyte common antigen (CD45) gene.</title>
        <authorList>
            <person name="Hall L.R."/>
            <person name="Streuli M."/>
            <person name="Schlossman S.F."/>
            <person name="Saito H."/>
        </authorList>
    </citation>
    <scope>NUCLEOTIDE SEQUENCE [GENOMIC DNA] OF 193-1306</scope>
    <source>
        <tissue>Placenta</tissue>
    </source>
</reference>
<reference key="8">
    <citation type="journal article" date="1988" name="Proc. Natl. Acad. Sci. U.S.A.">
        <title>The leukocyte common antigen (CD45): a putative receptor-linked protein tyrosine phosphatase.</title>
        <authorList>
            <person name="Charbonneau H."/>
            <person name="Tonks N.K."/>
            <person name="Walsh K.A."/>
            <person name="Fischer E.H."/>
        </authorList>
    </citation>
    <scope>FUNCTION</scope>
</reference>
<reference key="9">
    <citation type="journal article" date="1990" name="EMBO J.">
        <title>Distinct functional roles of the two intracellular phosphatase like domains of the receptor-linked protein tyrosine phosphatases LCA and LAR.</title>
        <authorList>
            <person name="Streuli M."/>
            <person name="Krueger N.X."/>
            <person name="Thai T."/>
            <person name="Tang M."/>
            <person name="Saito H."/>
        </authorList>
    </citation>
    <scope>MUTAGENESIS</scope>
</reference>
<reference key="10">
    <citation type="journal article" date="2000" name="Nat. Med.">
        <title>Mutations in the tyrosine phosphatase CD45 gene in a child with severe combined immunodeficiency disease.</title>
        <authorList>
            <person name="Kung C."/>
            <person name="Pingel J.T."/>
            <person name="Heikinheimo M."/>
            <person name="Klemola T."/>
            <person name="Varkila K."/>
            <person name="Yoo L.I."/>
            <person name="Vuopala K."/>
            <person name="Poyhonen M."/>
            <person name="Uhari M."/>
            <person name="Rogers M."/>
            <person name="Speck S.H."/>
            <person name="Chatila T."/>
            <person name="Thomas M.L."/>
        </authorList>
    </citation>
    <scope>INVOLVEMENT IN IMD105</scope>
</reference>
<reference key="11">
    <citation type="journal article" date="2002" name="Hum. Immunol.">
        <title>A study on CD45 isoform expression during T-cell development and selection events in the human thymus.</title>
        <authorList>
            <person name="Fukuhara K."/>
            <person name="Okumura M."/>
            <person name="Shiono H."/>
            <person name="Inoue M."/>
            <person name="Kadota Y."/>
            <person name="Miyoshi S."/>
            <person name="Matsuda H."/>
        </authorList>
    </citation>
    <scope>ALTERNATIVE SPLICING</scope>
    <scope>TISSUE SPECIFICITY</scope>
    <scope>DEVELOPMENTAL STAGE</scope>
</reference>
<reference key="12">
    <citation type="journal article" date="2002" name="Mol. Cell. Biol.">
        <title>SKAP55 coupled with CD45 positively regulates T-cell receptor-mediated gene transcription.</title>
        <authorList>
            <person name="Wu L."/>
            <person name="Fu J."/>
            <person name="Shen S.-H."/>
        </authorList>
    </citation>
    <scope>INTERACTION WITH SKAP1</scope>
    <scope>MUTAGENESIS OF CYS-853</scope>
    <scope>FUNCTION</scope>
</reference>
<reference key="13">
    <citation type="journal article" date="2003" name="J. Biol. Chem.">
        <title>A role for interleukin-12 in the regulation of T cell plasma membrane compartmentation.</title>
        <authorList>
            <person name="Salgado F.J."/>
            <person name="Lojo J."/>
            <person name="Alonso-Lebrero J.L."/>
            <person name="Lluis C."/>
            <person name="Franco R."/>
            <person name="Cordero O.J."/>
            <person name="Nogueira M."/>
        </authorList>
    </citation>
    <scope>INTERACTION WITH DPP4</scope>
    <scope>SUBCELLULAR LOCATION</scope>
</reference>
<reference key="14">
    <citation type="journal article" date="2006" name="Nat. Immunol.">
        <title>Regulation of effector T cells by antigen-presenting cells via interaction of the C-type lectin MGL with CD45.</title>
        <authorList>
            <person name="van Vliet S.J."/>
            <person name="Gringhuis S.I."/>
            <person name="Geijtenbeek T.B."/>
            <person name="van Kooyk Y."/>
        </authorList>
    </citation>
    <scope>INTERACTION WITH CLEC10A (ISOFORMS 1; 2; 3; 5 AND 7)</scope>
</reference>
<reference key="15">
    <citation type="journal article" date="2008" name="J. Proteome Res.">
        <title>Phosphorylation analysis of primary human T lymphocytes using sequential IMAC and titanium oxide enrichment.</title>
        <authorList>
            <person name="Carrascal M."/>
            <person name="Ovelleiro D."/>
            <person name="Casas V."/>
            <person name="Gay M."/>
            <person name="Abian J."/>
        </authorList>
    </citation>
    <scope>PHOSPHORYLATION [LARGE SCALE ANALYSIS] AT SER-975</scope>
    <scope>IDENTIFICATION BY MASS SPECTROMETRY [LARGE SCALE ANALYSIS]</scope>
    <source>
        <tissue>T-cell</tissue>
    </source>
</reference>
<reference key="16">
    <citation type="journal article" date="2009" name="J. Proteome Res.">
        <title>Glycoproteomics analysis of human liver tissue by combination of multiple enzyme digestion and hydrazide chemistry.</title>
        <authorList>
            <person name="Chen R."/>
            <person name="Jiang X."/>
            <person name="Sun D."/>
            <person name="Han G."/>
            <person name="Wang F."/>
            <person name="Ye M."/>
            <person name="Wang L."/>
            <person name="Zou H."/>
        </authorList>
    </citation>
    <scope>GLYCOSYLATION [LARGE SCALE ANALYSIS] AT ASN-234 AND ASN-337</scope>
    <source>
        <tissue>Liver</tissue>
    </source>
</reference>
<reference key="17">
    <citation type="journal article" date="2009" name="Nat. Biotechnol.">
        <title>Mass-spectrometric identification and relative quantification of N-linked cell surface glycoproteins.</title>
        <authorList>
            <person name="Wollscheid B."/>
            <person name="Bausch-Fluck D."/>
            <person name="Henderson C."/>
            <person name="O'Brien R."/>
            <person name="Bibel M."/>
            <person name="Schiess R."/>
            <person name="Aebersold R."/>
            <person name="Watts J.D."/>
        </authorList>
    </citation>
    <scope>GLYCOSYLATION [LARGE SCALE ANALYSIS] AT ASN-234; ASN-278; ASN-286; ASN-337; ASN-421 AND ASN-490</scope>
    <source>
        <tissue>Leukemic T-cell</tissue>
    </source>
</reference>
<reference key="18">
    <citation type="journal article" date="2009" name="Sci. Signal.">
        <title>Quantitative phosphoproteomic analysis of T cell receptor signaling reveals system-wide modulation of protein-protein interactions.</title>
        <authorList>
            <person name="Mayya V."/>
            <person name="Lundgren D.H."/>
            <person name="Hwang S.-I."/>
            <person name="Rezaul K."/>
            <person name="Wu L."/>
            <person name="Eng J.K."/>
            <person name="Rodionov V."/>
            <person name="Han D.K."/>
        </authorList>
    </citation>
    <scope>PHOSPHORYLATION [LARGE SCALE ANALYSIS] AT SER-975 AND SER-1299</scope>
    <scope>IDENTIFICATION BY MASS SPECTROMETRY [LARGE SCALE ANALYSIS]</scope>
    <source>
        <tissue>Leukemic T-cell</tissue>
    </source>
</reference>
<reference key="19">
    <citation type="journal article" date="2011" name="BMC Syst. Biol.">
        <title>Initial characterization of the human central proteome.</title>
        <authorList>
            <person name="Burkard T.R."/>
            <person name="Planyavsky M."/>
            <person name="Kaupe I."/>
            <person name="Breitwieser F.P."/>
            <person name="Buerckstuemmer T."/>
            <person name="Bennett K.L."/>
            <person name="Superti-Furga G."/>
            <person name="Colinge J."/>
        </authorList>
    </citation>
    <scope>IDENTIFICATION BY MASS SPECTROMETRY [LARGE SCALE ANALYSIS]</scope>
</reference>
<reference key="20">
    <citation type="journal article" date="2011" name="PLoS Pathog.">
        <title>The human cytomegalovirus UL11 protein interacts with the receptor tyrosine phosphatase CD45, resulting in functional paralysis of T cells.</title>
        <authorList>
            <person name="Gabaev I."/>
            <person name="Steinbrueck L."/>
            <person name="Pokoyski C."/>
            <person name="Pich A."/>
            <person name="Stanton R.J."/>
            <person name="Schwinzer R."/>
            <person name="Schulz T.F."/>
            <person name="Jacobs R."/>
            <person name="Messerle M."/>
            <person name="Kay-Fedorov P.C."/>
        </authorList>
    </citation>
    <scope>FUNCTION (MICROBIAL INFECTION)</scope>
    <scope>INTERACTION WITH HUMAN CYTOMEGALOVIRUS PROTEIN UL11</scope>
    <scope>SUBCELLULAR LOCATION (MICROBIAL INFECTION)</scope>
    <scope>IDENTIFICATION BY MASS SPECTROMETRY</scope>
</reference>
<reference key="21">
    <citation type="journal article" date="2013" name="J. Proteome Res.">
        <title>Toward a comprehensive characterization of a human cancer cell phosphoproteome.</title>
        <authorList>
            <person name="Zhou H."/>
            <person name="Di Palma S."/>
            <person name="Preisinger C."/>
            <person name="Peng M."/>
            <person name="Polat A.N."/>
            <person name="Heck A.J."/>
            <person name="Mohammed S."/>
        </authorList>
    </citation>
    <scope>PHOSPHORYLATION [LARGE SCALE ANALYSIS] AT SER-975 AND SER-994</scope>
    <scope>IDENTIFICATION BY MASS SPECTROMETRY [LARGE SCALE ANALYSIS]</scope>
    <source>
        <tissue>Erythroleukemia</tissue>
    </source>
</reference>
<reference key="22">
    <citation type="journal article" date="2015" name="Proteomics">
        <title>N-terminome analysis of the human mitochondrial proteome.</title>
        <authorList>
            <person name="Vaca Jacome A.S."/>
            <person name="Rabilloud T."/>
            <person name="Schaeffer-Reiss C."/>
            <person name="Rompais M."/>
            <person name="Ayoub D."/>
            <person name="Lane L."/>
            <person name="Bairoch A."/>
            <person name="Van Dorsselaer A."/>
            <person name="Carapito C."/>
        </authorList>
    </citation>
    <scope>IDENTIFICATION BY MASS SPECTROMETRY [LARGE SCALE ANALYSIS]</scope>
</reference>
<reference key="23">
    <citation type="journal article" date="2022" name="Cell Rep.">
        <title>Tetraspanin CD53 controls T cell immunity through regulation of CD45RO stability, mobility, and function.</title>
        <authorList>
            <person name="Dunlock V.E."/>
            <person name="Arp A.B."/>
            <person name="Singh S.P."/>
            <person name="Charrin S."/>
            <person name="Nguyen V."/>
            <person name="Jansen E."/>
            <person name="Schaper F."/>
            <person name="Beest M.T."/>
            <person name="Zuidscherwoude M."/>
            <person name="van Deventer S.J."/>
            <person name="Nakken B."/>
            <person name="Szodoray P."/>
            <person name="Demaria M.C."/>
            <person name="Wright M.D."/>
            <person name="Querol Cano L."/>
            <person name="Rubinstein E."/>
            <person name="van Spriel A.B."/>
        </authorList>
    </citation>
    <scope>FUNCTION</scope>
    <scope>INTERACTION WITH CD53</scope>
    <scope>SUBCELLULAR LOCATION</scope>
</reference>
<reference key="24">
    <citation type="journal article" date="2005" name="J. Exp. Med.">
        <title>Structural basis for the function and regulation of the receptor protein tyrosine phosphatase CD45.</title>
        <authorList>
            <person name="Nam H.J."/>
            <person name="Poy F."/>
            <person name="Saito H."/>
            <person name="Frederick C.A."/>
        </authorList>
    </citation>
    <scope>X-RAY CRYSTALLOGRAPHY (2.9 ANGSTROMS) OF 624-1233 ALONE AND IN COMPLEX WITH PHOSPHOPEPTIDE</scope>
</reference>
<reference key="25">
    <citation type="journal article" date="2000" name="Nat. Genet.">
        <title>A point mutation in PTPRC is associated with the development of multiple sclerosis.</title>
        <authorList>
            <person name="Jacobsen M."/>
            <person name="Schweer D."/>
            <person name="Ziegler A."/>
            <person name="Gaber R."/>
            <person name="Schock S."/>
            <person name="Schwinzer R."/>
            <person name="Wonigeit K."/>
            <person name="Lindert R.-B."/>
            <person name="Kantarci O."/>
            <person name="Schaefer-Klein J."/>
            <person name="Schipper H.I."/>
            <person name="Oertel W.H."/>
            <person name="Heidenreich F."/>
            <person name="Weinshenker B.G."/>
            <person name="Sommer N."/>
            <person name="Hemmer B."/>
        </authorList>
    </citation>
    <scope>INVOLVEMENT IN SUSCEPTIBILITY TO MS</scope>
</reference>
<reference key="26">
    <citation type="journal article" date="2001" name="J. Immunol.">
        <title>A deletion in the gene encoding the CD45 antigen in a patient with SCID.</title>
        <authorList>
            <person name="Tchilian E.Z."/>
            <person name="Wallace D.L."/>
            <person name="Wells R.S."/>
            <person name="Flower D.R."/>
            <person name="Morgan G."/>
            <person name="Beverley P.C.L."/>
        </authorList>
    </citation>
    <scope>VARIANT IMD105 364-GLU-TYR-365 DEL</scope>
    <scope>CHARACTERIZATION OF VARIANT IMD105 364-GLU-TYR-365 DEL</scope>
</reference>
<reference key="27">
    <citation type="journal article" date="2006" name="Science">
        <title>The consensus coding sequences of human breast and colorectal cancers.</title>
        <authorList>
            <person name="Sjoeblom T."/>
            <person name="Jones S."/>
            <person name="Wood L.D."/>
            <person name="Parsons D.W."/>
            <person name="Lin J."/>
            <person name="Barber T.D."/>
            <person name="Mandelker D."/>
            <person name="Leary R.J."/>
            <person name="Ptak J."/>
            <person name="Silliman N."/>
            <person name="Szabo S."/>
            <person name="Buckhaults P."/>
            <person name="Farrell C."/>
            <person name="Meeh P."/>
            <person name="Markowitz S.D."/>
            <person name="Willis J."/>
            <person name="Dawson D."/>
            <person name="Willson J.K.V."/>
            <person name="Gazdar A.F."/>
            <person name="Hartigan J."/>
            <person name="Wu L."/>
            <person name="Liu C."/>
            <person name="Parmigiani G."/>
            <person name="Park B.H."/>
            <person name="Bachman K.E."/>
            <person name="Papadopoulos N."/>
            <person name="Vogelstein B."/>
            <person name="Kinzler K.W."/>
            <person name="Velculescu V.E."/>
        </authorList>
    </citation>
    <scope>VARIANTS [LARGE SCALE ANALYSIS] ALA-230 AND ARG-865</scope>
</reference>
<reference key="28">
    <citation type="journal article" date="2012" name="Proc. Natl. Acad. Sci. U.S.A.">
        <title>CD45-deficient severe combined immunodeficiency caused by uniparental disomy.</title>
        <authorList>
            <person name="Roberts J.L."/>
            <person name="Buckley R.H."/>
            <person name="Luo B."/>
            <person name="Pei J."/>
            <person name="Lapidus A."/>
            <person name="Peri S."/>
            <person name="Wei Q."/>
            <person name="Shin J."/>
            <person name="Parrott R.E."/>
            <person name="Dunbrack R.L. Jr."/>
            <person name="Testa J.R."/>
            <person name="Zhong X.P."/>
            <person name="Wiest D.L."/>
        </authorList>
    </citation>
    <scope>VARIANT IMD105 542-LYS--SER-1306 DEL</scope>
</reference>
<accession>P08575</accession>
<accession>A0A0A0MT22</accession>
<accession>A8K7W6</accession>
<accession>Q16614</accession>
<accession>Q9H0Y6</accession>
<accession>X6R433</accession>
<gene>
    <name evidence="28" type="primary">PTPRC</name>
    <name type="synonym">CD45</name>
</gene>
<comment type="function">
    <text evidence="1 12 16 22 24">Protein tyrosine-protein phosphatase required for T-cell activation through the antigen receptor (PubMed:35767951). Acts as a positive regulator of T-cell coactivation upon binding to DPP4. The first PTPase domain has enzymatic activity, while the second one seems to affect the substrate specificity of the first one. Upon T-cell activation, recruits and dephosphorylates SKAP1 and FYN. Dephosphorylates LYN, and thereby modulates LYN activity (By similarity). Interacts with CLEC10A at antigen presenting cell-T cell contact; CLEC10A on immature dendritic cells recognizes Tn antigen-carrying PTPRC/CD45 receptor on effector T cells and modulates T cell activation threshold to limit autoreactivity.</text>
</comment>
<comment type="function">
    <text evidence="19">(Microbial infection) Acts as a receptor for human cytomegalovirus protein UL11 and mediates binding of UL11 to T-cells, leading to reduced induction of tyrosine phosphorylation of multiple signaling proteins upon T-cell receptor stimulation and impaired T-cell proliferation.</text>
</comment>
<comment type="catalytic activity">
    <reaction evidence="7">
        <text>O-phospho-L-tyrosyl-[protein] + H2O = L-tyrosyl-[protein] + phosphate</text>
        <dbReference type="Rhea" id="RHEA:10684"/>
        <dbReference type="Rhea" id="RHEA-COMP:10136"/>
        <dbReference type="Rhea" id="RHEA-COMP:20101"/>
        <dbReference type="ChEBI" id="CHEBI:15377"/>
        <dbReference type="ChEBI" id="CHEBI:43474"/>
        <dbReference type="ChEBI" id="CHEBI:46858"/>
        <dbReference type="ChEBI" id="CHEBI:61978"/>
        <dbReference type="EC" id="3.1.3.48"/>
    </reaction>
</comment>
<comment type="subunit">
    <text evidence="3 12 14 24">Binds GANAB and PRKCSH (By similarity). Interacts with SKAP1 (PubMed:11909961). Interacts with DPP4; the interaction is enhanced in an interleukin-12-dependent manner in activated lymphocytes (PubMed:12676959). Interacts with CD53; this interaction stabilizes PTPRC on the membrane and is required for optimal phosphatase activity (PubMed:35767951).</text>
</comment>
<comment type="subunit">
    <molecule>Isoform 1</molecule>
    <text evidence="16">Interacts with CLEC10A.</text>
</comment>
<comment type="subunit">
    <molecule>Isoform 2</molecule>
    <text evidence="16">Does not interact with CLEC10A.</text>
</comment>
<comment type="subunit">
    <molecule>Isoform 3</molecule>
    <text evidence="16">Interacts with CLEC10A.</text>
</comment>
<comment type="subunit">
    <molecule>Isoform 5</molecule>
    <text evidence="16">Interacts with CLEC10A.</text>
</comment>
<comment type="subunit">
    <molecule>Isoform 7</molecule>
    <text evidence="16">Interacts with CLEC10A.</text>
</comment>
<comment type="subunit">
    <text evidence="19">(Microbial infection) Interacts with human cytomegalovirus protein UL11; the interaction is required for binding of UL11 to T-cells.</text>
</comment>
<comment type="interaction">
    <interactant intactId="EBI-1341">
        <id>P08575</id>
    </interactant>
    <interactant intactId="EBI-1380630">
        <id>P41240</id>
        <label>CSK</label>
    </interactant>
    <organismsDiffer>false</organismsDiffer>
    <experiments>3</experiments>
</comment>
<comment type="interaction">
    <interactant intactId="EBI-1341">
        <id>P08575</id>
    </interactant>
    <interactant intactId="EBI-491549">
        <id>P35222</id>
        <label>CTNNB1</label>
    </interactant>
    <organismsDiffer>false</organismsDiffer>
    <experiments>2</experiments>
</comment>
<comment type="interaction">
    <interactant intactId="EBI-1341">
        <id>P08575</id>
    </interactant>
    <interactant intactId="EBI-297353">
        <id>P00533</id>
        <label>EGFR</label>
    </interactant>
    <organismsDiffer>false</organismsDiffer>
    <experiments>2</experiments>
</comment>
<comment type="interaction">
    <interactant intactId="EBI-1341">
        <id>P08575</id>
    </interactant>
    <interactant intactId="EBI-641062">
        <id>P04626</id>
        <label>ERBB2</label>
    </interactant>
    <organismsDiffer>false</organismsDiffer>
    <experiments>2</experiments>
</comment>
<comment type="interaction">
    <interactant intactId="EBI-1341">
        <id>P08575</id>
    </interactant>
    <interactant intactId="EBI-961214">
        <id>P20701</id>
        <label>ITGAL</label>
    </interactant>
    <organismsDiffer>false</organismsDiffer>
    <experiments>2</experiments>
</comment>
<comment type="interaction">
    <interactant intactId="EBI-1341">
        <id>P08575</id>
    </interactant>
    <interactant intactId="EBI-1348">
        <id>P06239</id>
        <label>LCK</label>
    </interactant>
    <organismsDiffer>false</organismsDiffer>
    <experiments>7</experiments>
</comment>
<comment type="interaction">
    <interactant intactId="EBI-1341">
        <id>P08575</id>
    </interactant>
    <interactant intactId="EBI-1048875">
        <id>P09382</id>
        <label>LGALS1</label>
    </interactant>
    <organismsDiffer>false</organismsDiffer>
    <experiments>2</experiments>
</comment>
<comment type="interaction">
    <interactant intactId="EBI-1341">
        <id>P08575</id>
    </interactant>
    <interactant intactId="EBI-2257090">
        <id>Q02763</id>
        <label>TEK</label>
    </interactant>
    <organismsDiffer>false</organismsDiffer>
    <experiments>3</experiments>
</comment>
<comment type="interaction">
    <interactant intactId="EBI-1341">
        <id>P08575</id>
    </interactant>
    <interactant intactId="EBI-1401">
        <id>P06240</id>
        <label>Lck</label>
    </interactant>
    <organismsDiffer>true</organismsDiffer>
    <experiments>2</experiments>
</comment>
<comment type="subcellular location">
    <subcellularLocation>
        <location evidence="14 19">Cell membrane</location>
        <topology evidence="4">Single-pass type I membrane protein</topology>
    </subcellularLocation>
    <subcellularLocation>
        <location evidence="14">Membrane raft</location>
    </subcellularLocation>
    <subcellularLocation>
        <location evidence="24">Synapse</location>
    </subcellularLocation>
    <text evidence="14">Colocalized with DPP4 in membrane rafts.</text>
</comment>
<comment type="alternative products">
    <event type="alternative splicing"/>
    <isoform>
        <id>P08575-3</id>
        <name>1</name>
        <name evidence="26">CD45RABC</name>
        <sequence type="displayed"/>
    </isoform>
    <isoform>
        <id>P08575-4</id>
        <name>2</name>
        <name evidence="26">CD45R0</name>
        <name evidence="25">CD45RO</name>
        <sequence type="described" ref="VSP_059409"/>
    </isoform>
    <isoform>
        <id>P08575-5</id>
        <name>3</name>
        <name evidence="26">CD45RAB</name>
        <sequence type="described" ref="VSP_059837"/>
    </isoform>
    <isoform>
        <id>P08575-6</id>
        <name>4</name>
        <name evidence="26">CD45RAC</name>
        <sequence type="described" ref="VSP_059836"/>
    </isoform>
    <isoform>
        <id>P08575-7</id>
        <name>5</name>
        <name evidence="26">CD45RBC</name>
        <sequence type="described" ref="VSP_059834"/>
    </isoform>
    <isoform>
        <id>P08575-8</id>
        <name>6</name>
        <name evidence="26">CD45RA</name>
        <sequence type="described" ref="VSP_059835"/>
    </isoform>
    <isoform>
        <id>P08575-9</id>
        <name>7</name>
        <name evidence="26">CD45RB</name>
        <sequence type="described" ref="VSP_059834 VSP_059837"/>
    </isoform>
    <isoform>
        <id>P08575-10</id>
        <name>8</name>
        <name evidence="26">CD45RC</name>
        <sequence type="described" ref="VSP_059833"/>
    </isoform>
</comment>
<comment type="tissue specificity">
    <text evidence="13">Isoform 1: Detected in thymocytes. Isoform 2: Detected in thymocytes. Isoform 3: Detected in thymocytes. Isoform 4: Not detected in thymocytes. Isoform 5: Detected in thymocytes. Isoform 6: Not detected in thymocytes. Isoform 7: Detected in thymocytes. Isoform 8: Not detected in thymocytes.</text>
</comment>
<comment type="developmental stage">
    <text evidence="13">Isoform 1: During T-cell development, expressed at the CD3-CD4-CD8- and CD3+CD4+CD8- stages but barely detectable at the CD3-CD4+CD8+ stage. Isoform 2: During T-cell development, expressed at low levels at the CD3-CD4-CD8- and CD3-CD4+CD8- stages but up-regulated at the CD3+CD4+CD8+ and CD3+CD4+CD8- stages. Isoform 3: During T-cell development, expressed at the CD3-CD4-CD8- and CD3+CD4+CD8- stages but barely detectable at the CD3-CD4+CD8+ stage. Isoform 5: During T-cell development, expressed at the CD3-CD4-CD8- and CD3+CD4+CD8- stages but barely detectable at the CD3-CD4+CD8+ stage. Isoform 7: Consistently expressed at high levels at all stages of T-cell development.</text>
</comment>
<comment type="domain">
    <text>The first PTPase domain interacts with SKAP1.</text>
</comment>
<comment type="PTM">
    <text evidence="17 18">Heavily N- and O-glycosylated.</text>
</comment>
<comment type="disease" evidence="10">
    <disease id="DI-02604">
        <name>Multiple sclerosis</name>
        <acronym>MS</acronym>
        <description>A multifactorial, inflammatory, demyelinating disease of the central nervous system. Sclerotic lesions are characterized by perivascular infiltration of monocytes and lymphocytes and appear as indurated areas in pathologic specimens (sclerosis in plaques). The pathological mechanism is regarded as an autoimmune attack of the myelin sheath, mediated by both cellular and humoral immunity. Clinical manifestations include visual loss, extra-ocular movement disorders, paresthesias, loss of sensation, weakness, dysarthria, spasticity, ataxia and bladder dysfunction. Genetic and environmental factors influence susceptibility to the disease.</description>
        <dbReference type="MIM" id="126200"/>
    </disease>
    <text>Disease susceptibility may be associated with variants affecting the gene represented in this entry.</text>
</comment>
<comment type="disease" evidence="9 11 20">
    <disease id="DI-06464">
        <name>Immunodeficiency 105, severe combined</name>
        <acronym>IMD105</acronym>
        <description>An autosomal recessive disorder characterized by recurrent infections in early infancy, decreased or absent numbers of non-functional T cells, normal or increased levels of B cells, hypogammaglobulinemia, and normal or low NK cells. Clinical manifestations may include pneumonia, dermatitis, and lymphadenopathy.</description>
        <dbReference type="MIM" id="619924"/>
    </disease>
    <text>The disease is caused by variants affecting the gene represented in this entry.</text>
</comment>
<comment type="similarity">
    <text evidence="27">Belongs to the protein-tyrosine phosphatase family. Receptor class 1/6 subfamily.</text>
</comment>
<comment type="caution">
    <text evidence="27">It is uncertain whether Met-1 or Met-3 is the initiator.</text>
</comment>
<comment type="sequence caution" evidence="27">
    <conflict type="erroneous initiation">
        <sequence resource="EMBL-CDS" id="BAF84820"/>
    </conflict>
    <text>Truncated N-terminus.</text>
</comment>
<comment type="sequence caution" evidence="27">
    <conflict type="erroneous initiation">
        <sequence resource="EMBL-CDS" id="CAA68269"/>
    </conflict>
    <text>Truncated N-terminus.</text>
</comment>
<comment type="sequence caution" evidence="27">
    <conflict type="erroneous initiation">
        <sequence resource="EMBL-CDS" id="CAA68669"/>
    </conflict>
    <text>Truncated N-terminus.</text>
</comment>
<comment type="online information" name="PTPRCbase">
    <link uri="https://databases.lovd.nl/shared/genes/PTPRC"/>
    <text>PTPRC mutation db</text>
</comment>
<comment type="online information" name="Wikipedia">
    <link uri="https://en.wikipedia.org/wiki/CD45"/>
    <text>CD45 entry</text>
</comment>
<feature type="signal peptide">
    <location>
        <begin position="1"/>
        <end position="25"/>
    </location>
</feature>
<feature type="chain" id="PRO_0000025470" description="Receptor-type tyrosine-protein phosphatase C">
    <location>
        <begin position="26"/>
        <end position="1306"/>
    </location>
</feature>
<feature type="topological domain" description="Extracellular" evidence="4">
    <location>
        <begin position="26"/>
        <end position="577"/>
    </location>
</feature>
<feature type="transmembrane region" description="Helical" evidence="4">
    <location>
        <begin position="578"/>
        <end position="598"/>
    </location>
</feature>
<feature type="topological domain" description="Cytoplasmic" evidence="4">
    <location>
        <begin position="599"/>
        <end position="1306"/>
    </location>
</feature>
<feature type="domain" description="Fibronectin type-III 1" evidence="6">
    <location>
        <begin position="391"/>
        <end position="483"/>
    </location>
</feature>
<feature type="domain" description="Fibronectin type-III 2" evidence="6">
    <location>
        <begin position="484"/>
        <end position="576"/>
    </location>
</feature>
<feature type="domain" description="Tyrosine-protein phosphatase 1" evidence="5">
    <location>
        <begin position="653"/>
        <end position="912"/>
    </location>
</feature>
<feature type="domain" description="Tyrosine-protein phosphatase 2" evidence="5">
    <location>
        <begin position="944"/>
        <end position="1228"/>
    </location>
</feature>
<feature type="region of interest" description="Disordered" evidence="8">
    <location>
        <begin position="28"/>
        <end position="163"/>
    </location>
</feature>
<feature type="region of interest" description="Disordered" evidence="8">
    <location>
        <begin position="993"/>
        <end position="1014"/>
    </location>
</feature>
<feature type="region of interest" description="Disordered" evidence="8">
    <location>
        <begin position="1261"/>
        <end position="1306"/>
    </location>
</feature>
<feature type="compositionally biased region" description="Polar residues" evidence="8">
    <location>
        <begin position="52"/>
        <end position="61"/>
    </location>
</feature>
<feature type="compositionally biased region" description="Polar residues" evidence="8">
    <location>
        <begin position="70"/>
        <end position="131"/>
    </location>
</feature>
<feature type="compositionally biased region" description="Acidic residues" evidence="8">
    <location>
        <begin position="999"/>
        <end position="1012"/>
    </location>
</feature>
<feature type="active site" description="Phosphocysteine intermediate">
    <location>
        <position position="853"/>
    </location>
</feature>
<feature type="active site" description="Phosphocysteine intermediate" evidence="1">
    <location>
        <position position="1169"/>
    </location>
</feature>
<feature type="binding site" evidence="1">
    <location>
        <position position="821"/>
    </location>
    <ligand>
        <name>substrate</name>
    </ligand>
</feature>
<feature type="binding site" evidence="1">
    <location>
        <begin position="853"/>
        <end position="859"/>
    </location>
    <ligand>
        <name>substrate</name>
    </ligand>
</feature>
<feature type="binding site" evidence="1">
    <location>
        <position position="897"/>
    </location>
    <ligand>
        <name>substrate</name>
    </ligand>
</feature>
<feature type="modified residue" description="Phosphotyrosine" evidence="2">
    <location>
        <position position="683"/>
    </location>
</feature>
<feature type="modified residue" description="Phosphoserine" evidence="29 30 31">
    <location>
        <position position="975"/>
    </location>
</feature>
<feature type="modified residue" description="Phosphoserine" evidence="31">
    <location>
        <position position="994"/>
    </location>
</feature>
<feature type="modified residue" description="Phosphoserine" evidence="2">
    <location>
        <position position="997"/>
    </location>
</feature>
<feature type="modified residue" description="Phosphoserine" evidence="2">
    <location>
        <position position="1001"/>
    </location>
</feature>
<feature type="modified residue" description="Phosphoserine" evidence="2">
    <location>
        <position position="1004"/>
    </location>
</feature>
<feature type="modified residue" description="Phosphoserine" evidence="3">
    <location>
        <position position="1005"/>
    </location>
</feature>
<feature type="modified residue" description="Phosphoserine" evidence="2">
    <location>
        <position position="1009"/>
    </location>
</feature>
<feature type="modified residue" description="Phosphoserine" evidence="30">
    <location>
        <position position="1299"/>
    </location>
</feature>
<feature type="glycosylation site" description="N-linked (GlcNAc...) asparagine" evidence="4">
    <location>
        <position position="80"/>
    </location>
</feature>
<feature type="glycosylation site" description="N-linked (GlcNAc...) asparagine" evidence="4">
    <location>
        <position position="92"/>
    </location>
</feature>
<feature type="glycosylation site" description="N-linked (GlcNAc...) asparagine" evidence="4">
    <location>
        <position position="97"/>
    </location>
</feature>
<feature type="glycosylation site" description="N-linked (GlcNAc...) asparagine" evidence="4">
    <location>
        <position position="186"/>
    </location>
</feature>
<feature type="glycosylation site" description="N-linked (GlcNAc...) asparagine" evidence="4">
    <location>
        <position position="192"/>
    </location>
</feature>
<feature type="glycosylation site" description="N-linked (GlcNAc...) asparagine" evidence="4">
    <location>
        <position position="199"/>
    </location>
</feature>
<feature type="glycosylation site" description="N-linked (GlcNAc...) asparagine" evidence="17 18">
    <location>
        <position position="234"/>
    </location>
</feature>
<feature type="glycosylation site" description="N-linked (GlcNAc...) asparagine" evidence="4">
    <location>
        <position position="262"/>
    </location>
</feature>
<feature type="glycosylation site" description="N-linked (GlcNAc...) asparagine" evidence="4">
    <location>
        <position position="272"/>
    </location>
</feature>
<feature type="glycosylation site" description="N-linked (GlcNAc...) asparagine" evidence="18">
    <location>
        <position position="278"/>
    </location>
</feature>
<feature type="glycosylation site" description="N-linked (GlcNAc...) asparagine; atypical" evidence="18">
    <location>
        <position position="286"/>
    </location>
</feature>
<feature type="glycosylation site" description="N-linked (GlcNAc...) asparagine" evidence="17 18">
    <location>
        <position position="337"/>
    </location>
</feature>
<feature type="glycosylation site" description="N-linked (GlcNAc...) asparagine" evidence="4">
    <location>
        <position position="380"/>
    </location>
</feature>
<feature type="glycosylation site" description="N-linked (GlcNAc...) asparagine" evidence="18">
    <location>
        <position position="421"/>
    </location>
</feature>
<feature type="glycosylation site" description="N-linked (GlcNAc...) asparagine" evidence="4">
    <location>
        <position position="470"/>
    </location>
</feature>
<feature type="glycosylation site" description="N-linked (GlcNAc...) asparagine" evidence="18">
    <location>
        <position position="490"/>
    </location>
</feature>
<feature type="glycosylation site" description="N-linked (GlcNAc...) asparagine" evidence="4">
    <location>
        <position position="531"/>
    </location>
</feature>
<feature type="splice variant" id="VSP_059409" description="In isoform 2." evidence="23">
    <location>
        <begin position="34"/>
        <end position="194"/>
    </location>
</feature>
<feature type="splice variant" id="VSP_059833" description="In isoform 8." evidence="13">
    <location>
        <begin position="34"/>
        <end position="146"/>
    </location>
</feature>
<feature type="splice variant" id="VSP_059834" description="In isoform 5 and isoform 7." evidence="13 21">
    <location>
        <begin position="34"/>
        <end position="99"/>
    </location>
</feature>
<feature type="splice variant" id="VSP_059835" description="In isoform 6." evidence="21">
    <location>
        <begin position="100"/>
        <end position="194"/>
    </location>
</feature>
<feature type="splice variant" id="VSP_059836" description="In isoform 4." evidence="21">
    <location>
        <begin position="100"/>
        <end position="146"/>
    </location>
</feature>
<feature type="splice variant" id="VSP_059837" description="In isoform 3 and isoform 7." evidence="13 21">
    <location>
        <begin position="147"/>
        <end position="194"/>
    </location>
</feature>
<feature type="sequence variant" id="VAR_036860" description="In dbSNP:rs4915154.">
    <original>T</original>
    <variation>A</variation>
    <location>
        <position position="193"/>
    </location>
</feature>
<feature type="sequence variant" id="VAR_035653" description="In a breast cancer sample; somatic mutation." evidence="15">
    <original>E</original>
    <variation>A</variation>
    <location>
        <position position="230"/>
    </location>
</feature>
<feature type="sequence variant" id="VAR_051763" description="In dbSNP:rs2230606.">
    <original>I</original>
    <variation>L</variation>
    <location>
        <position position="296"/>
    </location>
</feature>
<feature type="sequence variant" id="VAR_021205" description="In IMD105; associated with lack of surface expression." evidence="11">
    <location>
        <begin position="364"/>
        <end position="365"/>
    </location>
</feature>
<feature type="sequence variant" id="VAR_051764" description="In dbSNP:rs6696162.">
    <original>T</original>
    <variation>I</variation>
    <location>
        <position position="423"/>
    </location>
</feature>
<feature type="sequence variant" id="VAR_087537" description="In IMD105." evidence="20">
    <location>
        <begin position="542"/>
        <end position="1306"/>
    </location>
</feature>
<feature type="sequence variant" id="VAR_051765" description="In dbSNP:rs12136658.">
    <original>H</original>
    <variation>Q</variation>
    <location>
        <position position="570"/>
    </location>
</feature>
<feature type="sequence variant" id="VAR_035654" description="In a breast cancer sample; somatic mutation." evidence="15">
    <original>G</original>
    <variation>R</variation>
    <location>
        <position position="865"/>
    </location>
</feature>
<feature type="sequence variant" id="VAR_020303" description="In dbSNP:rs2298872.">
    <original>S</original>
    <variation>R</variation>
    <location>
        <position position="1285"/>
    </location>
</feature>
<feature type="mutagenesis site" description="Loss of activity. Abolishes interaction with SKAP1." evidence="12">
    <original>C</original>
    <variation>S</variation>
    <location>
        <position position="853"/>
    </location>
</feature>
<feature type="sequence conflict" description="In Ref. 1; CAA68669." evidence="27" ref="1">
    <original>L</original>
    <variation>P</variation>
    <location>
        <position position="652"/>
    </location>
</feature>
<feature type="sequence conflict" description="In Ref. 1; CAA68669." evidence="27" ref="1">
    <original>P</original>
    <variation>L</variation>
    <location>
        <position position="1209"/>
    </location>
</feature>
<feature type="helix" evidence="34">
    <location>
        <begin position="228"/>
        <end position="231"/>
    </location>
</feature>
<feature type="turn" evidence="34">
    <location>
        <begin position="232"/>
        <end position="234"/>
    </location>
</feature>
<feature type="strand" evidence="34">
    <location>
        <begin position="237"/>
        <end position="242"/>
    </location>
</feature>
<feature type="turn" evidence="34">
    <location>
        <begin position="243"/>
        <end position="246"/>
    </location>
</feature>
<feature type="strand" evidence="34">
    <location>
        <begin position="247"/>
        <end position="252"/>
    </location>
</feature>
<feature type="strand" evidence="34">
    <location>
        <begin position="259"/>
        <end position="263"/>
    </location>
</feature>
<feature type="helix" evidence="34">
    <location>
        <begin position="266"/>
        <end position="268"/>
    </location>
</feature>
<feature type="strand" evidence="34">
    <location>
        <begin position="269"/>
        <end position="273"/>
    </location>
</feature>
<feature type="strand" evidence="34">
    <location>
        <begin position="278"/>
        <end position="284"/>
    </location>
</feature>
<feature type="strand" evidence="34">
    <location>
        <begin position="288"/>
        <end position="291"/>
    </location>
</feature>
<feature type="strand" evidence="34">
    <location>
        <begin position="293"/>
        <end position="298"/>
    </location>
</feature>
<feature type="helix" evidence="34">
    <location>
        <begin position="303"/>
        <end position="305"/>
    </location>
</feature>
<feature type="strand" evidence="34">
    <location>
        <begin position="306"/>
        <end position="310"/>
    </location>
</feature>
<feature type="helix" evidence="34">
    <location>
        <begin position="314"/>
        <end position="316"/>
    </location>
</feature>
<feature type="turn" evidence="34">
    <location>
        <begin position="317"/>
        <end position="319"/>
    </location>
</feature>
<feature type="strand" evidence="34">
    <location>
        <begin position="321"/>
        <end position="327"/>
    </location>
</feature>
<feature type="helix" evidence="34">
    <location>
        <begin position="335"/>
        <end position="337"/>
    </location>
</feature>
<feature type="strand" evidence="34">
    <location>
        <begin position="338"/>
        <end position="344"/>
    </location>
</feature>
<feature type="strand" evidence="34">
    <location>
        <begin position="347"/>
        <end position="356"/>
    </location>
</feature>
<feature type="strand" evidence="34">
    <location>
        <begin position="364"/>
        <end position="373"/>
    </location>
</feature>
<feature type="strand" evidence="34">
    <location>
        <begin position="376"/>
        <end position="388"/>
    </location>
</feature>
<feature type="strand" evidence="33">
    <location>
        <begin position="396"/>
        <end position="401"/>
    </location>
</feature>
<feature type="strand" evidence="33">
    <location>
        <begin position="403"/>
        <end position="406"/>
    </location>
</feature>
<feature type="strand" evidence="33">
    <location>
        <begin position="408"/>
        <end position="413"/>
    </location>
</feature>
<feature type="strand" evidence="33">
    <location>
        <begin position="420"/>
        <end position="427"/>
    </location>
</feature>
<feature type="strand" evidence="33">
    <location>
        <begin position="429"/>
        <end position="438"/>
    </location>
</feature>
<feature type="strand" evidence="33">
    <location>
        <begin position="443"/>
        <end position="446"/>
    </location>
</feature>
<feature type="strand" evidence="33">
    <location>
        <begin position="454"/>
        <end position="470"/>
    </location>
</feature>
<feature type="strand" evidence="33">
    <location>
        <begin position="474"/>
        <end position="479"/>
    </location>
</feature>
<feature type="strand" evidence="33">
    <location>
        <begin position="489"/>
        <end position="499"/>
    </location>
</feature>
<feature type="strand" evidence="33">
    <location>
        <begin position="501"/>
        <end position="506"/>
    </location>
</feature>
<feature type="strand" evidence="33">
    <location>
        <begin position="518"/>
        <end position="541"/>
    </location>
</feature>
<feature type="strand" evidence="33">
    <location>
        <begin position="549"/>
        <end position="557"/>
    </location>
</feature>
<feature type="strand" evidence="33">
    <location>
        <begin position="566"/>
        <end position="571"/>
    </location>
</feature>
<feature type="turn" evidence="32">
    <location>
        <begin position="635"/>
        <end position="637"/>
    </location>
</feature>
<feature type="helix" evidence="32">
    <location>
        <begin position="638"/>
        <end position="658"/>
    </location>
</feature>
<feature type="strand" evidence="32">
    <location>
        <begin position="665"/>
        <end position="667"/>
    </location>
</feature>
<feature type="turn" evidence="32">
    <location>
        <begin position="670"/>
        <end position="672"/>
    </location>
</feature>
<feature type="helix" evidence="32">
    <location>
        <begin position="675"/>
        <end position="680"/>
    </location>
</feature>
<feature type="turn" evidence="32">
    <location>
        <begin position="690"/>
        <end position="692"/>
    </location>
</feature>
<feature type="strand" evidence="32">
    <location>
        <begin position="693"/>
        <end position="695"/>
    </location>
</feature>
<feature type="strand" evidence="32">
    <location>
        <begin position="700"/>
        <end position="702"/>
    </location>
</feature>
<feature type="turn" evidence="32">
    <location>
        <begin position="703"/>
        <end position="706"/>
    </location>
</feature>
<feature type="strand" evidence="32">
    <location>
        <begin position="707"/>
        <end position="713"/>
    </location>
</feature>
<feature type="strand" evidence="32">
    <location>
        <begin position="716"/>
        <end position="718"/>
    </location>
</feature>
<feature type="strand" evidence="32">
    <location>
        <begin position="722"/>
        <end position="725"/>
    </location>
</feature>
<feature type="turn" evidence="32">
    <location>
        <begin position="730"/>
        <end position="732"/>
    </location>
</feature>
<feature type="helix" evidence="32">
    <location>
        <begin position="733"/>
        <end position="742"/>
    </location>
</feature>
<feature type="strand" evidence="32">
    <location>
        <begin position="747"/>
        <end position="750"/>
    </location>
</feature>
<feature type="strand" evidence="32">
    <location>
        <begin position="754"/>
        <end position="756"/>
    </location>
</feature>
<feature type="strand" evidence="32">
    <location>
        <begin position="759"/>
        <end position="761"/>
    </location>
</feature>
<feature type="turn" evidence="32">
    <location>
        <begin position="769"/>
        <end position="771"/>
    </location>
</feature>
<feature type="strand" evidence="32">
    <location>
        <begin position="773"/>
        <end position="776"/>
    </location>
</feature>
<feature type="strand" evidence="32">
    <location>
        <begin position="779"/>
        <end position="788"/>
    </location>
</feature>
<feature type="strand" evidence="32">
    <location>
        <begin position="790"/>
        <end position="804"/>
    </location>
</feature>
<feature type="strand" evidence="32">
    <location>
        <begin position="809"/>
        <end position="816"/>
    </location>
</feature>
<feature type="helix" evidence="32">
    <location>
        <begin position="828"/>
        <end position="838"/>
    </location>
</feature>
<feature type="strand" evidence="32">
    <location>
        <begin position="849"/>
        <end position="852"/>
    </location>
</feature>
<feature type="strand" evidence="32">
    <location>
        <begin position="854"/>
        <end position="857"/>
    </location>
</feature>
<feature type="helix" evidence="32">
    <location>
        <begin position="858"/>
        <end position="871"/>
    </location>
</feature>
<feature type="helix" evidence="32">
    <location>
        <begin position="873"/>
        <end position="876"/>
    </location>
</feature>
<feature type="strand" evidence="32">
    <location>
        <begin position="877"/>
        <end position="879"/>
    </location>
</feature>
<feature type="helix" evidence="32">
    <location>
        <begin position="881"/>
        <end position="889"/>
    </location>
</feature>
<feature type="helix" evidence="32">
    <location>
        <begin position="899"/>
        <end position="915"/>
    </location>
</feature>
<feature type="helix" evidence="32">
    <location>
        <begin position="922"/>
        <end position="924"/>
    </location>
</feature>
<feature type="helix" evidence="32">
    <location>
        <begin position="925"/>
        <end position="932"/>
    </location>
</feature>
<feature type="helix" evidence="32">
    <location>
        <begin position="943"/>
        <end position="950"/>
    </location>
</feature>
<feature type="helix" evidence="32">
    <location>
        <begin position="962"/>
        <end position="964"/>
    </location>
</feature>
<feature type="helix" evidence="32">
    <location>
        <begin position="968"/>
        <end position="970"/>
    </location>
</feature>
<feature type="turn" evidence="32">
    <location>
        <begin position="981"/>
        <end position="983"/>
    </location>
</feature>
<feature type="strand" evidence="32">
    <location>
        <begin position="1020"/>
        <end position="1024"/>
    </location>
</feature>
<feature type="strand" evidence="32">
    <location>
        <begin position="1031"/>
        <end position="1036"/>
    </location>
</feature>
<feature type="turn" evidence="32">
    <location>
        <begin position="1040"/>
        <end position="1042"/>
    </location>
</feature>
<feature type="helix" evidence="32">
    <location>
        <begin position="1043"/>
        <end position="1052"/>
    </location>
</feature>
<feature type="strand" evidence="32">
    <location>
        <begin position="1057"/>
        <end position="1060"/>
    </location>
</feature>
<feature type="strand" evidence="32">
    <location>
        <begin position="1064"/>
        <end position="1066"/>
    </location>
</feature>
<feature type="strand" evidence="32">
    <location>
        <begin position="1069"/>
        <end position="1072"/>
    </location>
</feature>
<feature type="strand" evidence="32">
    <location>
        <begin position="1090"/>
        <end position="1095"/>
    </location>
</feature>
<feature type="strand" evidence="32">
    <location>
        <begin position="1097"/>
        <end position="1107"/>
    </location>
</feature>
<feature type="strand" evidence="32">
    <location>
        <begin position="1115"/>
        <end position="1122"/>
    </location>
</feature>
<feature type="strand" evidence="32">
    <location>
        <begin position="1127"/>
        <end position="1129"/>
    </location>
</feature>
<feature type="helix" evidence="32">
    <location>
        <begin position="1134"/>
        <end position="1145"/>
    </location>
</feature>
<feature type="strand" evidence="32">
    <location>
        <begin position="1165"/>
        <end position="1173"/>
    </location>
</feature>
<feature type="helix" evidence="32">
    <location>
        <begin position="1176"/>
        <end position="1191"/>
    </location>
</feature>
<feature type="strand" evidence="32">
    <location>
        <begin position="1192"/>
        <end position="1194"/>
    </location>
</feature>
<feature type="helix" evidence="32">
    <location>
        <begin position="1197"/>
        <end position="1207"/>
    </location>
</feature>
<feature type="turn" evidence="32">
    <location>
        <begin position="1209"/>
        <end position="1212"/>
    </location>
</feature>
<feature type="helix" evidence="32">
    <location>
        <begin position="1215"/>
        <end position="1227"/>
    </location>
</feature>
<name>PTPRC_HUMAN</name>
<protein>
    <recommendedName>
        <fullName evidence="27">Receptor-type tyrosine-protein phosphatase C</fullName>
        <ecNumber>3.1.3.48</ecNumber>
    </recommendedName>
    <alternativeName>
        <fullName>Leukocyte common antigen</fullName>
        <shortName>L-CA</shortName>
    </alternativeName>
    <alternativeName>
        <fullName>T200</fullName>
    </alternativeName>
    <cdAntigenName>CD45</cdAntigenName>
</protein>
<keyword id="KW-0002">3D-structure</keyword>
<keyword id="KW-0025">Alternative splicing</keyword>
<keyword id="KW-1003">Cell membrane</keyword>
<keyword id="KW-0225">Disease variant</keyword>
<keyword id="KW-0325">Glycoprotein</keyword>
<keyword id="KW-0945">Host-virus interaction</keyword>
<keyword id="KW-0378">Hydrolase</keyword>
<keyword id="KW-0472">Membrane</keyword>
<keyword id="KW-0597">Phosphoprotein</keyword>
<keyword id="KW-0904">Protein phosphatase</keyword>
<keyword id="KW-1267">Proteomics identification</keyword>
<keyword id="KW-1185">Reference proteome</keyword>
<keyword id="KW-0677">Repeat</keyword>
<keyword id="KW-0705">SCID</keyword>
<keyword id="KW-0732">Signal</keyword>
<keyword id="KW-0770">Synapse</keyword>
<keyword id="KW-0812">Transmembrane</keyword>
<keyword id="KW-1133">Transmembrane helix</keyword>
<dbReference type="EC" id="3.1.3.48"/>
<dbReference type="EMBL" id="Y00638">
    <property type="protein sequence ID" value="CAA68669.1"/>
    <property type="status" value="ALT_INIT"/>
    <property type="molecule type" value="mRNA"/>
</dbReference>
<dbReference type="EMBL" id="Y00062">
    <property type="protein sequence ID" value="CAA68269.1"/>
    <property type="status" value="ALT_INIT"/>
    <property type="molecule type" value="mRNA"/>
</dbReference>
<dbReference type="EMBL" id="AK292131">
    <property type="protein sequence ID" value="BAF84820.1"/>
    <property type="status" value="ALT_INIT"/>
    <property type="molecule type" value="mRNA"/>
</dbReference>
<dbReference type="EMBL" id="AL157402">
    <property type="status" value="NOT_ANNOTATED_CDS"/>
    <property type="molecule type" value="Genomic_DNA"/>
</dbReference>
<dbReference type="EMBL" id="AL355988">
    <property type="status" value="NOT_ANNOTATED_CDS"/>
    <property type="molecule type" value="Genomic_DNA"/>
</dbReference>
<dbReference type="EMBL" id="KF510707">
    <property type="status" value="NOT_ANNOTATED_CDS"/>
    <property type="molecule type" value="Genomic_DNA"/>
</dbReference>
<dbReference type="EMBL" id="CH471067">
    <property type="protein sequence ID" value="EAW91303.1"/>
    <property type="molecule type" value="Genomic_DNA"/>
</dbReference>
<dbReference type="EMBL" id="M23492">
    <property type="protein sequence ID" value="AAD15273.2"/>
    <property type="molecule type" value="Genomic_DNA"/>
</dbReference>
<dbReference type="EMBL" id="M23496">
    <property type="protein sequence ID" value="AAD15273.2"/>
    <property type="status" value="JOINED"/>
    <property type="molecule type" value="Genomic_DNA"/>
</dbReference>
<dbReference type="EMBL" id="M23466">
    <property type="protein sequence ID" value="AAD15273.2"/>
    <property type="status" value="JOINED"/>
    <property type="molecule type" value="Genomic_DNA"/>
</dbReference>
<dbReference type="EMBL" id="M23467">
    <property type="protein sequence ID" value="AAD15273.2"/>
    <property type="status" value="JOINED"/>
    <property type="molecule type" value="Genomic_DNA"/>
</dbReference>
<dbReference type="EMBL" id="M23468">
    <property type="protein sequence ID" value="AAD15273.2"/>
    <property type="status" value="JOINED"/>
    <property type="molecule type" value="Genomic_DNA"/>
</dbReference>
<dbReference type="EMBL" id="M23469">
    <property type="protein sequence ID" value="AAD15273.2"/>
    <property type="status" value="JOINED"/>
    <property type="molecule type" value="Genomic_DNA"/>
</dbReference>
<dbReference type="EMBL" id="M23470">
    <property type="protein sequence ID" value="AAD15273.2"/>
    <property type="status" value="JOINED"/>
    <property type="molecule type" value="Genomic_DNA"/>
</dbReference>
<dbReference type="EMBL" id="M23471">
    <property type="protein sequence ID" value="AAD15273.2"/>
    <property type="status" value="JOINED"/>
    <property type="molecule type" value="Genomic_DNA"/>
</dbReference>
<dbReference type="EMBL" id="M23472">
    <property type="protein sequence ID" value="AAD15273.2"/>
    <property type="status" value="JOINED"/>
    <property type="molecule type" value="Genomic_DNA"/>
</dbReference>
<dbReference type="EMBL" id="M23473">
    <property type="protein sequence ID" value="AAD15273.2"/>
    <property type="status" value="JOINED"/>
    <property type="molecule type" value="Genomic_DNA"/>
</dbReference>
<dbReference type="EMBL" id="M23474">
    <property type="protein sequence ID" value="AAD15273.2"/>
    <property type="status" value="JOINED"/>
    <property type="molecule type" value="Genomic_DNA"/>
</dbReference>
<dbReference type="EMBL" id="M23475">
    <property type="protein sequence ID" value="AAD15273.2"/>
    <property type="status" value="JOINED"/>
    <property type="molecule type" value="Genomic_DNA"/>
</dbReference>
<dbReference type="EMBL" id="M23476">
    <property type="protein sequence ID" value="AAD15273.2"/>
    <property type="status" value="JOINED"/>
    <property type="molecule type" value="Genomic_DNA"/>
</dbReference>
<dbReference type="EMBL" id="M23477">
    <property type="protein sequence ID" value="AAD15273.2"/>
    <property type="status" value="JOINED"/>
    <property type="molecule type" value="Genomic_DNA"/>
</dbReference>
<dbReference type="EMBL" id="M23478">
    <property type="protein sequence ID" value="AAD15273.2"/>
    <property type="status" value="JOINED"/>
    <property type="molecule type" value="Genomic_DNA"/>
</dbReference>
<dbReference type="EMBL" id="M23479">
    <property type="protein sequence ID" value="AAD15273.2"/>
    <property type="status" value="JOINED"/>
    <property type="molecule type" value="Genomic_DNA"/>
</dbReference>
<dbReference type="EMBL" id="M23480">
    <property type="protein sequence ID" value="AAD15273.2"/>
    <property type="status" value="JOINED"/>
    <property type="molecule type" value="Genomic_DNA"/>
</dbReference>
<dbReference type="EMBL" id="M23481">
    <property type="protein sequence ID" value="AAD15273.2"/>
    <property type="status" value="JOINED"/>
    <property type="molecule type" value="Genomic_DNA"/>
</dbReference>
<dbReference type="EMBL" id="M23482">
    <property type="protein sequence ID" value="AAD15273.2"/>
    <property type="status" value="JOINED"/>
    <property type="molecule type" value="Genomic_DNA"/>
</dbReference>
<dbReference type="EMBL" id="M23483">
    <property type="protein sequence ID" value="AAD15273.2"/>
    <property type="status" value="JOINED"/>
    <property type="molecule type" value="Genomic_DNA"/>
</dbReference>
<dbReference type="EMBL" id="M23484">
    <property type="protein sequence ID" value="AAD15273.2"/>
    <property type="status" value="JOINED"/>
    <property type="molecule type" value="Genomic_DNA"/>
</dbReference>
<dbReference type="EMBL" id="M23485">
    <property type="protein sequence ID" value="AAD15273.2"/>
    <property type="status" value="JOINED"/>
    <property type="molecule type" value="Genomic_DNA"/>
</dbReference>
<dbReference type="EMBL" id="M23486">
    <property type="protein sequence ID" value="AAD15273.2"/>
    <property type="status" value="JOINED"/>
    <property type="molecule type" value="Genomic_DNA"/>
</dbReference>
<dbReference type="EMBL" id="M23487">
    <property type="protein sequence ID" value="AAD15273.2"/>
    <property type="status" value="JOINED"/>
    <property type="molecule type" value="Genomic_DNA"/>
</dbReference>
<dbReference type="EMBL" id="M23488">
    <property type="protein sequence ID" value="AAD15273.2"/>
    <property type="status" value="JOINED"/>
    <property type="molecule type" value="Genomic_DNA"/>
</dbReference>
<dbReference type="EMBL" id="M23489">
    <property type="protein sequence ID" value="AAD15273.2"/>
    <property type="status" value="JOINED"/>
    <property type="molecule type" value="Genomic_DNA"/>
</dbReference>
<dbReference type="EMBL" id="M23490">
    <property type="protein sequence ID" value="AAD15273.2"/>
    <property type="status" value="JOINED"/>
    <property type="molecule type" value="Genomic_DNA"/>
</dbReference>
<dbReference type="EMBL" id="M23491">
    <property type="protein sequence ID" value="AAD15273.2"/>
    <property type="status" value="JOINED"/>
    <property type="molecule type" value="Genomic_DNA"/>
</dbReference>
<dbReference type="CCDS" id="CCDS1397.2">
    <molecule id="P08575-3"/>
</dbReference>
<dbReference type="CCDS" id="CCDS1398.2">
    <molecule id="P08575-4"/>
</dbReference>
<dbReference type="PIR" id="A46546">
    <property type="entry name" value="A46546"/>
</dbReference>
<dbReference type="RefSeq" id="NP_002829.3">
    <molecule id="P08575-3"/>
    <property type="nucleotide sequence ID" value="NM_002838.4"/>
</dbReference>
<dbReference type="RefSeq" id="NP_563578.2">
    <molecule id="P08575-4"/>
    <property type="nucleotide sequence ID" value="NM_080921.4"/>
</dbReference>
<dbReference type="RefSeq" id="XP_006711535.1">
    <molecule id="P08575-5"/>
    <property type="nucleotide sequence ID" value="XM_006711472.5"/>
</dbReference>
<dbReference type="RefSeq" id="XP_006711536.1">
    <molecule id="P08575-7"/>
    <property type="nucleotide sequence ID" value="XM_006711473.4"/>
</dbReference>
<dbReference type="RefSeq" id="XP_006711537.1">
    <molecule id="P08575-9"/>
    <property type="nucleotide sequence ID" value="XM_006711474.4"/>
</dbReference>
<dbReference type="RefSeq" id="XP_047282337.1">
    <molecule id="P08575-3"/>
    <property type="nucleotide sequence ID" value="XM_047426381.1"/>
</dbReference>
<dbReference type="RefSeq" id="XP_047282354.1">
    <molecule id="P08575-7"/>
    <property type="nucleotide sequence ID" value="XM_047426398.1"/>
</dbReference>
<dbReference type="RefSeq" id="XP_047282365.1">
    <molecule id="P08575-9"/>
    <property type="nucleotide sequence ID" value="XM_047426409.1"/>
</dbReference>
<dbReference type="RefSeq" id="XP_047282371.1">
    <molecule id="P08575-4"/>
    <property type="nucleotide sequence ID" value="XM_047426415.1"/>
</dbReference>
<dbReference type="RefSeq" id="XP_054193920.1">
    <molecule id="P08575-3"/>
    <property type="nucleotide sequence ID" value="XM_054337945.1"/>
</dbReference>
<dbReference type="RefSeq" id="XP_054193921.1">
    <molecule id="P08575-5"/>
    <property type="nucleotide sequence ID" value="XM_054337946.1"/>
</dbReference>
<dbReference type="RefSeq" id="XP_054193922.1">
    <molecule id="P08575-7"/>
    <property type="nucleotide sequence ID" value="XM_054337947.1"/>
</dbReference>
<dbReference type="RefSeq" id="XP_054193923.1">
    <molecule id="P08575-7"/>
    <property type="nucleotide sequence ID" value="XM_054337948.1"/>
</dbReference>
<dbReference type="RefSeq" id="XP_054193924.1">
    <molecule id="P08575-9"/>
    <property type="nucleotide sequence ID" value="XM_054337949.1"/>
</dbReference>
<dbReference type="RefSeq" id="XP_054193925.1">
    <molecule id="P08575-9"/>
    <property type="nucleotide sequence ID" value="XM_054337950.1"/>
</dbReference>
<dbReference type="RefSeq" id="XP_054193926.1">
    <molecule id="P08575-4"/>
    <property type="nucleotide sequence ID" value="XM_054337951.1"/>
</dbReference>
<dbReference type="PDB" id="1YGR">
    <property type="method" value="X-ray"/>
    <property type="resolution" value="2.90 A"/>
    <property type="chains" value="A/B=624-1233"/>
</dbReference>
<dbReference type="PDB" id="1YGU">
    <property type="method" value="X-ray"/>
    <property type="resolution" value="2.90 A"/>
    <property type="chains" value="A/B=624-1233"/>
</dbReference>
<dbReference type="PDB" id="5FMV">
    <property type="method" value="X-ray"/>
    <property type="resolution" value="2.90 A"/>
    <property type="chains" value="A/B=225-573"/>
</dbReference>
<dbReference type="PDB" id="5FN6">
    <property type="method" value="X-ray"/>
    <property type="resolution" value="3.30 A"/>
    <property type="chains" value="A=225-481"/>
</dbReference>
<dbReference type="PDB" id="5FN7">
    <property type="method" value="X-ray"/>
    <property type="resolution" value="2.30 A"/>
    <property type="chains" value="A/B=225-394"/>
</dbReference>
<dbReference type="PDB" id="8VSE">
    <property type="method" value="EM"/>
    <property type="resolution" value="3.80 A"/>
    <property type="chains" value="A/B=26-576"/>
</dbReference>
<dbReference type="PDBsum" id="1YGR"/>
<dbReference type="PDBsum" id="1YGU"/>
<dbReference type="PDBsum" id="5FMV"/>
<dbReference type="PDBsum" id="5FN6"/>
<dbReference type="PDBsum" id="5FN7"/>
<dbReference type="PDBsum" id="8VSE"/>
<dbReference type="EMDB" id="EMD-43497"/>
<dbReference type="SMR" id="P08575"/>
<dbReference type="BioGRID" id="111752">
    <property type="interactions" value="34"/>
</dbReference>
<dbReference type="CORUM" id="P08575"/>
<dbReference type="DIP" id="DIP-224N"/>
<dbReference type="FunCoup" id="P08575">
    <property type="interactions" value="620"/>
</dbReference>
<dbReference type="IntAct" id="P08575">
    <property type="interactions" value="91"/>
</dbReference>
<dbReference type="MINT" id="P08575"/>
<dbReference type="STRING" id="9606.ENSP00000411355"/>
<dbReference type="BindingDB" id="P08575"/>
<dbReference type="ChEMBL" id="CHEMBL3243"/>
<dbReference type="TCDB" id="8.A.128.1.11">
    <property type="family name" value="the signaling adaptor protein karap/dap12/tyrobp (sap) family"/>
</dbReference>
<dbReference type="DEPOD" id="PTPRC"/>
<dbReference type="GlyConnect" id="339">
    <property type="glycosylation" value="63 N-Linked glycans (9 sites), 15 O-Linked glycans (2 sites)"/>
</dbReference>
<dbReference type="GlyCosmos" id="P08575">
    <property type="glycosylation" value="25 sites, 100 glycans"/>
</dbReference>
<dbReference type="GlyGen" id="P08575">
    <property type="glycosylation" value="41 sites, 76 N-linked glycans (10 sites), 25 O-linked glycans (7 sites)"/>
</dbReference>
<dbReference type="iPTMnet" id="P08575"/>
<dbReference type="MetOSite" id="P08575"/>
<dbReference type="PhosphoSitePlus" id="P08575"/>
<dbReference type="SwissPalm" id="P08575"/>
<dbReference type="BioMuta" id="PTPRC"/>
<dbReference type="DMDM" id="33112650"/>
<dbReference type="CPTAC" id="CPTAC-1172"/>
<dbReference type="CPTAC" id="CPTAC-5846"/>
<dbReference type="CPTAC" id="CPTAC-5847"/>
<dbReference type="CPTAC" id="CPTAC-5871"/>
<dbReference type="CPTAC" id="CPTAC-5872"/>
<dbReference type="CPTAC" id="CPTAC-5945"/>
<dbReference type="CPTAC" id="CPTAC-5946"/>
<dbReference type="jPOST" id="P08575"/>
<dbReference type="MassIVE" id="P08575"/>
<dbReference type="PaxDb" id="9606-ENSP00000411355"/>
<dbReference type="PeptideAtlas" id="P08575"/>
<dbReference type="Pumba" id="P08575"/>
<dbReference type="ABCD" id="P08575">
    <property type="antibodies" value="10 sequenced antibodies"/>
</dbReference>
<dbReference type="Antibodypedia" id="737">
    <property type="antibodies" value="10495 antibodies from 56 providers"/>
</dbReference>
<dbReference type="CPTC" id="P08575">
    <property type="antibodies" value="2 antibodies"/>
</dbReference>
<dbReference type="DNASU" id="5788"/>
<dbReference type="Ensembl" id="ENST00000348564.12">
    <molecule id="P08575-4"/>
    <property type="protein sequence ID" value="ENSP00000306782.7"/>
    <property type="gene ID" value="ENSG00000081237.22"/>
</dbReference>
<dbReference type="Ensembl" id="ENST00000442510.8">
    <molecule id="P08575-3"/>
    <property type="protein sequence ID" value="ENSP00000411355.3"/>
    <property type="gene ID" value="ENSG00000081237.22"/>
</dbReference>
<dbReference type="Ensembl" id="ENST00000573477.5">
    <property type="protein sequence ID" value="ENSP00000461074.2"/>
    <property type="gene ID" value="ENSG00000262418.5"/>
</dbReference>
<dbReference type="Ensembl" id="ENST00000573679.5">
    <property type="protein sequence ID" value="ENSP00000458322.2"/>
    <property type="gene ID" value="ENSG00000262418.5"/>
</dbReference>
<dbReference type="Ensembl" id="ENST00000697631.1">
    <molecule id="P08575-8"/>
    <property type="protein sequence ID" value="ENSP00000513363.1"/>
    <property type="gene ID" value="ENSG00000081237.22"/>
</dbReference>
<dbReference type="GeneID" id="5788"/>
<dbReference type="KEGG" id="hsa:5788"/>
<dbReference type="MANE-Select" id="ENST00000442510.8">
    <property type="protein sequence ID" value="ENSP00000411355.3"/>
    <property type="RefSeq nucleotide sequence ID" value="NM_002838.5"/>
    <property type="RefSeq protein sequence ID" value="NP_002829.3"/>
</dbReference>
<dbReference type="UCSC" id="uc001gur.3">
    <property type="organism name" value="human"/>
</dbReference>
<dbReference type="UCSC" id="uc061fse.1">
    <molecule id="P08575-3"/>
    <property type="organism name" value="human"/>
</dbReference>
<dbReference type="AGR" id="HGNC:9666"/>
<dbReference type="CTD" id="5788"/>
<dbReference type="DisGeNET" id="5788"/>
<dbReference type="GeneCards" id="PTPRC"/>
<dbReference type="HGNC" id="HGNC:9666">
    <property type="gene designation" value="PTPRC"/>
</dbReference>
<dbReference type="HPA" id="ENSG00000081237">
    <property type="expression patterns" value="Tissue enhanced (lymphoid)"/>
</dbReference>
<dbReference type="MalaCards" id="PTPRC"/>
<dbReference type="MIM" id="126200">
    <property type="type" value="phenotype"/>
</dbReference>
<dbReference type="MIM" id="151460">
    <property type="type" value="gene"/>
</dbReference>
<dbReference type="MIM" id="619924">
    <property type="type" value="phenotype"/>
</dbReference>
<dbReference type="neXtProt" id="NX_P08575"/>
<dbReference type="OpenTargets" id="ENSG00000081237"/>
<dbReference type="Orphanet" id="169157">
    <property type="disease" value="T-B+ severe combined immunodeficiency due to CD45 deficiency"/>
</dbReference>
<dbReference type="PharmGKB" id="PA34011"/>
<dbReference type="VEuPathDB" id="HostDB:ENSG00000081237"/>
<dbReference type="eggNOG" id="KOG4228">
    <property type="taxonomic scope" value="Eukaryota"/>
</dbReference>
<dbReference type="GeneTree" id="ENSGT00940000159457"/>
<dbReference type="InParanoid" id="P08575"/>
<dbReference type="OMA" id="ILHYIIH"/>
<dbReference type="OrthoDB" id="5794147at2759"/>
<dbReference type="PAN-GO" id="P08575">
    <property type="GO annotations" value="4 GO annotations based on evolutionary models"/>
</dbReference>
<dbReference type="PhylomeDB" id="P08575"/>
<dbReference type="TreeFam" id="TF351829"/>
<dbReference type="PathwayCommons" id="P08575"/>
<dbReference type="Reactome" id="R-HSA-202427">
    <property type="pathway name" value="Phosphorylation of CD3 and TCR zeta chains"/>
</dbReference>
<dbReference type="Reactome" id="R-HSA-416700">
    <property type="pathway name" value="Other semaphorin interactions"/>
</dbReference>
<dbReference type="Reactome" id="R-HSA-6798695">
    <property type="pathway name" value="Neutrophil degranulation"/>
</dbReference>
<dbReference type="SignaLink" id="P08575"/>
<dbReference type="SIGNOR" id="P08575"/>
<dbReference type="BioGRID-ORCS" id="5788">
    <property type="hits" value="20 hits in 1177 CRISPR screens"/>
</dbReference>
<dbReference type="ChiTaRS" id="PTPRC">
    <property type="organism name" value="human"/>
</dbReference>
<dbReference type="EvolutionaryTrace" id="P08575"/>
<dbReference type="GeneWiki" id="PTPRC"/>
<dbReference type="GenomeRNAi" id="5788"/>
<dbReference type="Pharos" id="P08575">
    <property type="development level" value="Tchem"/>
</dbReference>
<dbReference type="PRO" id="PR:P08575"/>
<dbReference type="Proteomes" id="UP000005640">
    <property type="component" value="Chromosome 1"/>
</dbReference>
<dbReference type="RNAct" id="P08575">
    <property type="molecule type" value="protein"/>
</dbReference>
<dbReference type="Bgee" id="ENSG00000081237">
    <property type="expression patterns" value="Expressed in monocyte and 197 other cell types or tissues"/>
</dbReference>
<dbReference type="ExpressionAtlas" id="P08575">
    <property type="expression patterns" value="baseline and differential"/>
</dbReference>
<dbReference type="GO" id="GO:0032059">
    <property type="term" value="C:bleb"/>
    <property type="evidence" value="ECO:0000314"/>
    <property type="project" value="ARUK-UCL"/>
</dbReference>
<dbReference type="GO" id="GO:0009986">
    <property type="term" value="C:cell surface"/>
    <property type="evidence" value="ECO:0000314"/>
    <property type="project" value="UniProtKB"/>
</dbReference>
<dbReference type="GO" id="GO:0009898">
    <property type="term" value="C:cytoplasmic side of plasma membrane"/>
    <property type="evidence" value="ECO:0000303"/>
    <property type="project" value="ARUK-UCL"/>
</dbReference>
<dbReference type="GO" id="GO:0009897">
    <property type="term" value="C:external side of plasma membrane"/>
    <property type="evidence" value="ECO:0000314"/>
    <property type="project" value="MGI"/>
</dbReference>
<dbReference type="GO" id="GO:0070062">
    <property type="term" value="C:extracellular exosome"/>
    <property type="evidence" value="ECO:0007005"/>
    <property type="project" value="UniProtKB"/>
</dbReference>
<dbReference type="GO" id="GO:0005925">
    <property type="term" value="C:focal adhesion"/>
    <property type="evidence" value="ECO:0000250"/>
    <property type="project" value="UniProtKB"/>
</dbReference>
<dbReference type="GO" id="GO:0016020">
    <property type="term" value="C:membrane"/>
    <property type="evidence" value="ECO:0007005"/>
    <property type="project" value="UniProtKB"/>
</dbReference>
<dbReference type="GO" id="GO:0098857">
    <property type="term" value="C:membrane microdomain"/>
    <property type="evidence" value="ECO:0000250"/>
    <property type="project" value="ARUK-UCL"/>
</dbReference>
<dbReference type="GO" id="GO:0045121">
    <property type="term" value="C:membrane raft"/>
    <property type="evidence" value="ECO:0000250"/>
    <property type="project" value="ARUK-UCL"/>
</dbReference>
<dbReference type="GO" id="GO:0005886">
    <property type="term" value="C:plasma membrane"/>
    <property type="evidence" value="ECO:0000314"/>
    <property type="project" value="ARUK-UCL"/>
</dbReference>
<dbReference type="GO" id="GO:0030667">
    <property type="term" value="C:secretory granule membrane"/>
    <property type="evidence" value="ECO:0000304"/>
    <property type="project" value="Reactome"/>
</dbReference>
<dbReference type="GO" id="GO:0045202">
    <property type="term" value="C:synapse"/>
    <property type="evidence" value="ECO:0007669"/>
    <property type="project" value="UniProtKB-SubCell"/>
</dbReference>
<dbReference type="GO" id="GO:0030506">
    <property type="term" value="F:ankyrin binding"/>
    <property type="evidence" value="ECO:0000353"/>
    <property type="project" value="ARUK-UCL"/>
</dbReference>
<dbReference type="GO" id="GO:0043395">
    <property type="term" value="F:heparan sulfate proteoglycan binding"/>
    <property type="evidence" value="ECO:0007669"/>
    <property type="project" value="Ensembl"/>
</dbReference>
<dbReference type="GO" id="GO:0008201">
    <property type="term" value="F:heparin binding"/>
    <property type="evidence" value="ECO:0007669"/>
    <property type="project" value="Ensembl"/>
</dbReference>
<dbReference type="GO" id="GO:0019901">
    <property type="term" value="F:protein kinase binding"/>
    <property type="evidence" value="ECO:0000353"/>
    <property type="project" value="UniProtKB"/>
</dbReference>
<dbReference type="GO" id="GO:0030292">
    <property type="term" value="F:protein tyrosine kinase inhibitor activity"/>
    <property type="evidence" value="ECO:0000314"/>
    <property type="project" value="ARUK-UCL"/>
</dbReference>
<dbReference type="GO" id="GO:0004725">
    <property type="term" value="F:protein tyrosine phosphatase activity"/>
    <property type="evidence" value="ECO:0000314"/>
    <property type="project" value="UniProtKB"/>
</dbReference>
<dbReference type="GO" id="GO:0005102">
    <property type="term" value="F:signaling receptor binding"/>
    <property type="evidence" value="ECO:0000250"/>
    <property type="project" value="ARUK-UCL"/>
</dbReference>
<dbReference type="GO" id="GO:0030507">
    <property type="term" value="F:spectrin binding"/>
    <property type="evidence" value="ECO:0000314"/>
    <property type="project" value="ARUK-UCL"/>
</dbReference>
<dbReference type="GO" id="GO:0005001">
    <property type="term" value="F:transmembrane receptor protein tyrosine phosphatase activity"/>
    <property type="evidence" value="ECO:0000316"/>
    <property type="project" value="ARUK-UCL"/>
</dbReference>
<dbReference type="GO" id="GO:0046633">
    <property type="term" value="P:alpha-beta T cell proliferation"/>
    <property type="evidence" value="ECO:0007669"/>
    <property type="project" value="Ensembl"/>
</dbReference>
<dbReference type="GO" id="GO:0030183">
    <property type="term" value="P:B cell differentiation"/>
    <property type="evidence" value="ECO:0000250"/>
    <property type="project" value="ARUK-UCL"/>
</dbReference>
<dbReference type="GO" id="GO:0042100">
    <property type="term" value="P:B cell proliferation"/>
    <property type="evidence" value="ECO:0000250"/>
    <property type="project" value="UniProtKB"/>
</dbReference>
<dbReference type="GO" id="GO:0050853">
    <property type="term" value="P:B cell receptor signaling pathway"/>
    <property type="evidence" value="ECO:0000250"/>
    <property type="project" value="UniProtKB"/>
</dbReference>
<dbReference type="GO" id="GO:0048539">
    <property type="term" value="P:bone marrow development"/>
    <property type="evidence" value="ECO:0000315"/>
    <property type="project" value="UniProtKB"/>
</dbReference>
<dbReference type="GO" id="GO:0044770">
    <property type="term" value="P:cell cycle phase transition"/>
    <property type="evidence" value="ECO:0000315"/>
    <property type="project" value="UniProtKB"/>
</dbReference>
<dbReference type="GO" id="GO:0007166">
    <property type="term" value="P:cell surface receptor signaling pathway"/>
    <property type="evidence" value="ECO:0000304"/>
    <property type="project" value="ProtInc"/>
</dbReference>
<dbReference type="GO" id="GO:0051607">
    <property type="term" value="P:defense response to virus"/>
    <property type="evidence" value="ECO:0000250"/>
    <property type="project" value="UniProtKB"/>
</dbReference>
<dbReference type="GO" id="GO:0016311">
    <property type="term" value="P:dephosphorylation"/>
    <property type="evidence" value="ECO:0000250"/>
    <property type="project" value="UniProtKB"/>
</dbReference>
<dbReference type="GO" id="GO:1904155">
    <property type="term" value="P:DN2 thymocyte differentiation"/>
    <property type="evidence" value="ECO:0000304"/>
    <property type="project" value="ARUK-UCL"/>
</dbReference>
<dbReference type="GO" id="GO:0097191">
    <property type="term" value="P:extrinsic apoptotic signaling pathway"/>
    <property type="evidence" value="ECO:0007669"/>
    <property type="project" value="Ensembl"/>
</dbReference>
<dbReference type="GO" id="GO:0042492">
    <property type="term" value="P:gamma-delta T cell differentiation"/>
    <property type="evidence" value="ECO:0007669"/>
    <property type="project" value="Ensembl"/>
</dbReference>
<dbReference type="GO" id="GO:0002244">
    <property type="term" value="P:hematopoietic progenitor cell differentiation"/>
    <property type="evidence" value="ECO:0000315"/>
    <property type="project" value="UniProtKB"/>
</dbReference>
<dbReference type="GO" id="GO:0034113">
    <property type="term" value="P:heterotypic cell-cell adhesion"/>
    <property type="evidence" value="ECO:0007669"/>
    <property type="project" value="Ensembl"/>
</dbReference>
<dbReference type="GO" id="GO:0007159">
    <property type="term" value="P:leukocyte cell-cell adhesion"/>
    <property type="evidence" value="ECO:0007669"/>
    <property type="project" value="Ensembl"/>
</dbReference>
<dbReference type="GO" id="GO:0000165">
    <property type="term" value="P:MAPK cascade"/>
    <property type="evidence" value="ECO:0007669"/>
    <property type="project" value="Ensembl"/>
</dbReference>
<dbReference type="GO" id="GO:0001779">
    <property type="term" value="P:natural killer cell differentiation"/>
    <property type="evidence" value="ECO:0000250"/>
    <property type="project" value="ARUK-UCL"/>
</dbReference>
<dbReference type="GO" id="GO:0006933">
    <property type="term" value="P:negative regulation of cell adhesion involved in substrate-bound cell migration"/>
    <property type="evidence" value="ECO:0000315"/>
    <property type="project" value="UniProtKB"/>
</dbReference>
<dbReference type="GO" id="GO:0001960">
    <property type="term" value="P:negative regulation of cytokine-mediated signaling pathway"/>
    <property type="evidence" value="ECO:0000250"/>
    <property type="project" value="UniProtKB"/>
</dbReference>
<dbReference type="GO" id="GO:0070373">
    <property type="term" value="P:negative regulation of ERK1 and ERK2 cascade"/>
    <property type="evidence" value="ECO:0000250"/>
    <property type="project" value="ARUK-UCL"/>
</dbReference>
<dbReference type="GO" id="GO:0032703">
    <property type="term" value="P:negative regulation of interleukin-2 production"/>
    <property type="evidence" value="ECO:0000250"/>
    <property type="project" value="ARUK-UCL"/>
</dbReference>
<dbReference type="GO" id="GO:1902215">
    <property type="term" value="P:negative regulation of interleukin-4-mediated signaling pathway"/>
    <property type="evidence" value="ECO:0000316"/>
    <property type="project" value="ARUK-UCL"/>
</dbReference>
<dbReference type="GO" id="GO:1903979">
    <property type="term" value="P:negative regulation of microglial cell activation"/>
    <property type="evidence" value="ECO:0000304"/>
    <property type="project" value="ARUK-UCL"/>
</dbReference>
<dbReference type="GO" id="GO:0006469">
    <property type="term" value="P:negative regulation of protein kinase activity"/>
    <property type="evidence" value="ECO:0000314"/>
    <property type="project" value="UniProtKB"/>
</dbReference>
<dbReference type="GO" id="GO:0046426">
    <property type="term" value="P:negative regulation of receptor signaling pathway via JAK-STAT"/>
    <property type="evidence" value="ECO:0000316"/>
    <property type="project" value="ARUK-UCL"/>
</dbReference>
<dbReference type="GO" id="GO:0001915">
    <property type="term" value="P:negative regulation of T cell mediated cytotoxicity"/>
    <property type="evidence" value="ECO:0000250"/>
    <property type="project" value="UniProtKB"/>
</dbReference>
<dbReference type="GO" id="GO:0000122">
    <property type="term" value="P:negative regulation of transcription by RNA polymerase II"/>
    <property type="evidence" value="ECO:0000316"/>
    <property type="project" value="ARUK-UCL"/>
</dbReference>
<dbReference type="GO" id="GO:0045060">
    <property type="term" value="P:negative thymic T cell selection"/>
    <property type="evidence" value="ECO:0007669"/>
    <property type="project" value="Ensembl"/>
</dbReference>
<dbReference type="GO" id="GO:0044855">
    <property type="term" value="P:plasma membrane raft distribution"/>
    <property type="evidence" value="ECO:0000250"/>
    <property type="project" value="ARUK-UCL"/>
</dbReference>
<dbReference type="GO" id="GO:0046641">
    <property type="term" value="P:positive regulation of alpha-beta T cell proliferation"/>
    <property type="evidence" value="ECO:0007669"/>
    <property type="project" value="Ensembl"/>
</dbReference>
<dbReference type="GO" id="GO:0050857">
    <property type="term" value="P:positive regulation of antigen receptor-mediated signaling pathway"/>
    <property type="evidence" value="ECO:0000250"/>
    <property type="project" value="UniProtKB"/>
</dbReference>
<dbReference type="GO" id="GO:0030890">
    <property type="term" value="P:positive regulation of B cell proliferation"/>
    <property type="evidence" value="ECO:0000315"/>
    <property type="project" value="UniProtKB"/>
</dbReference>
<dbReference type="GO" id="GO:0050850">
    <property type="term" value="P:positive regulation of calcium-mediated signaling"/>
    <property type="evidence" value="ECO:0000250"/>
    <property type="project" value="ARUK-UCL"/>
</dbReference>
<dbReference type="GO" id="GO:0070374">
    <property type="term" value="P:positive regulation of ERK1 and ERK2 cascade"/>
    <property type="evidence" value="ECO:0000250"/>
    <property type="project" value="ARUK-UCL"/>
</dbReference>
<dbReference type="GO" id="GO:2001238">
    <property type="term" value="P:positive regulation of extrinsic apoptotic signaling pathway"/>
    <property type="evidence" value="ECO:0007669"/>
    <property type="project" value="Ensembl"/>
</dbReference>
<dbReference type="GO" id="GO:0060369">
    <property type="term" value="P:positive regulation of Fc receptor mediated stimulatory signaling pathway"/>
    <property type="evidence" value="ECO:0000250"/>
    <property type="project" value="ARUK-UCL"/>
</dbReference>
<dbReference type="GO" id="GO:0045588">
    <property type="term" value="P:positive regulation of gamma-delta T cell differentiation"/>
    <property type="evidence" value="ECO:0007669"/>
    <property type="project" value="Ensembl"/>
</dbReference>
<dbReference type="GO" id="GO:2000473">
    <property type="term" value="P:positive regulation of hematopoietic stem cell migration"/>
    <property type="evidence" value="ECO:0000315"/>
    <property type="project" value="UniProtKB"/>
</dbReference>
<dbReference type="GO" id="GO:0002925">
    <property type="term" value="P:positive regulation of humoral immune response mediated by circulating immunoglobulin"/>
    <property type="evidence" value="ECO:0007669"/>
    <property type="project" value="Ensembl"/>
</dbReference>
<dbReference type="GO" id="GO:0002639">
    <property type="term" value="P:positive regulation of immunoglobulin production"/>
    <property type="evidence" value="ECO:0000315"/>
    <property type="project" value="UniProtKB"/>
</dbReference>
<dbReference type="GO" id="GO:0032743">
    <property type="term" value="P:positive regulation of interleukin-2 production"/>
    <property type="evidence" value="ECO:0000250"/>
    <property type="project" value="ARUK-UCL"/>
</dbReference>
<dbReference type="GO" id="GO:0048304">
    <property type="term" value="P:positive regulation of isotype switching to IgG isotypes"/>
    <property type="evidence" value="ECO:0007669"/>
    <property type="project" value="Ensembl"/>
</dbReference>
<dbReference type="GO" id="GO:0043410">
    <property type="term" value="P:positive regulation of MAPK cascade"/>
    <property type="evidence" value="ECO:0000250"/>
    <property type="project" value="ARUK-UCL"/>
</dbReference>
<dbReference type="GO" id="GO:0050766">
    <property type="term" value="P:positive regulation of phagocytosis"/>
    <property type="evidence" value="ECO:0000250"/>
    <property type="project" value="ARUK-UCL"/>
</dbReference>
<dbReference type="GO" id="GO:0045860">
    <property type="term" value="P:positive regulation of protein kinase activity"/>
    <property type="evidence" value="ECO:0000303"/>
    <property type="project" value="UniProtKB"/>
</dbReference>
<dbReference type="GO" id="GO:2000648">
    <property type="term" value="P:positive regulation of stem cell proliferation"/>
    <property type="evidence" value="ECO:0000315"/>
    <property type="project" value="UniProtKB"/>
</dbReference>
<dbReference type="GO" id="GO:0001916">
    <property type="term" value="P:positive regulation of T cell mediated cytotoxicity"/>
    <property type="evidence" value="ECO:0007669"/>
    <property type="project" value="Ensembl"/>
</dbReference>
<dbReference type="GO" id="GO:0042102">
    <property type="term" value="P:positive regulation of T cell proliferation"/>
    <property type="evidence" value="ECO:0000250"/>
    <property type="project" value="UniProtKB"/>
</dbReference>
<dbReference type="GO" id="GO:0032760">
    <property type="term" value="P:positive regulation of tumor necrosis factor production"/>
    <property type="evidence" value="ECO:0000250"/>
    <property type="project" value="ARUK-UCL"/>
</dbReference>
<dbReference type="GO" id="GO:0045059">
    <property type="term" value="P:positive thymic T cell selection"/>
    <property type="evidence" value="ECO:0007669"/>
    <property type="project" value="Ensembl"/>
</dbReference>
<dbReference type="GO" id="GO:0006470">
    <property type="term" value="P:protein dephosphorylation"/>
    <property type="evidence" value="ECO:0000250"/>
    <property type="project" value="UniProtKB"/>
</dbReference>
<dbReference type="GO" id="GO:0051726">
    <property type="term" value="P:regulation of cell cycle"/>
    <property type="evidence" value="ECO:0000250"/>
    <property type="project" value="UniProtKB"/>
</dbReference>
<dbReference type="GO" id="GO:0010468">
    <property type="term" value="P:regulation of gene expression"/>
    <property type="evidence" value="ECO:0000250"/>
    <property type="project" value="ARUK-UCL"/>
</dbReference>
<dbReference type="GO" id="GO:0032677">
    <property type="term" value="P:regulation of interleukin-8 production"/>
    <property type="evidence" value="ECO:0000314"/>
    <property type="project" value="ARUK-UCL"/>
</dbReference>
<dbReference type="GO" id="GO:0050764">
    <property type="term" value="P:regulation of phagocytosis"/>
    <property type="evidence" value="ECO:0000314"/>
    <property type="project" value="ARUK-UCL"/>
</dbReference>
<dbReference type="GO" id="GO:0050856">
    <property type="term" value="P:regulation of T cell receptor signaling pathway"/>
    <property type="evidence" value="ECO:0000250"/>
    <property type="project" value="ARUK-UCL"/>
</dbReference>
<dbReference type="GO" id="GO:0051209">
    <property type="term" value="P:release of sequestered calcium ion into cytosol"/>
    <property type="evidence" value="ECO:0000250"/>
    <property type="project" value="UniProtKB"/>
</dbReference>
<dbReference type="GO" id="GO:1904044">
    <property type="term" value="P:response to aldosterone"/>
    <property type="evidence" value="ECO:0007669"/>
    <property type="project" value="Ensembl"/>
</dbReference>
<dbReference type="GO" id="GO:0010332">
    <property type="term" value="P:response to gamma radiation"/>
    <property type="evidence" value="ECO:0007669"/>
    <property type="project" value="Ensembl"/>
</dbReference>
<dbReference type="GO" id="GO:0007165">
    <property type="term" value="P:signal transduction"/>
    <property type="evidence" value="ECO:0000318"/>
    <property type="project" value="GO_Central"/>
</dbReference>
<dbReference type="GO" id="GO:0048864">
    <property type="term" value="P:stem cell development"/>
    <property type="evidence" value="ECO:0000315"/>
    <property type="project" value="UniProtKB"/>
</dbReference>
<dbReference type="GO" id="GO:0042110">
    <property type="term" value="P:T cell activation"/>
    <property type="evidence" value="ECO:0000304"/>
    <property type="project" value="ARUK-UCL"/>
</dbReference>
<dbReference type="GO" id="GO:0030217">
    <property type="term" value="P:T cell differentiation"/>
    <property type="evidence" value="ECO:0000250"/>
    <property type="project" value="UniProtKB"/>
</dbReference>
<dbReference type="GO" id="GO:0050852">
    <property type="term" value="P:T cell receptor signaling pathway"/>
    <property type="evidence" value="ECO:0000314"/>
    <property type="project" value="UniProtKB"/>
</dbReference>
<dbReference type="CDD" id="cd00063">
    <property type="entry name" value="FN3"/>
    <property type="match status" value="2"/>
</dbReference>
<dbReference type="CDD" id="cd14558">
    <property type="entry name" value="R-PTP-C-2"/>
    <property type="match status" value="1"/>
</dbReference>
<dbReference type="CDD" id="cd14557">
    <property type="entry name" value="R-PTPc-C-1"/>
    <property type="match status" value="1"/>
</dbReference>
<dbReference type="FunFam" id="2.60.40.10:FF:001462">
    <property type="entry name" value="Receptor-type tyrosine-protein phosphatase C"/>
    <property type="match status" value="1"/>
</dbReference>
<dbReference type="FunFam" id="2.60.40.10:FF:002177">
    <property type="entry name" value="Receptor-type tyrosine-protein phosphatase C"/>
    <property type="match status" value="1"/>
</dbReference>
<dbReference type="FunFam" id="3.90.190.10:FF:000033">
    <property type="entry name" value="receptor-type tyrosine-protein phosphatase C isoform X1"/>
    <property type="match status" value="1"/>
</dbReference>
<dbReference type="FunFam" id="3.90.190.10:FF:000042">
    <property type="entry name" value="receptor-type tyrosine-protein phosphatase C isoform X1"/>
    <property type="match status" value="1"/>
</dbReference>
<dbReference type="Gene3D" id="2.60.40.10">
    <property type="entry name" value="Immunoglobulins"/>
    <property type="match status" value="2"/>
</dbReference>
<dbReference type="Gene3D" id="3.90.190.10">
    <property type="entry name" value="Protein tyrosine phosphatase superfamily"/>
    <property type="match status" value="2"/>
</dbReference>
<dbReference type="IDEAL" id="IID00537"/>
<dbReference type="InterPro" id="IPR003961">
    <property type="entry name" value="FN3_dom"/>
</dbReference>
<dbReference type="InterPro" id="IPR036116">
    <property type="entry name" value="FN3_sf"/>
</dbReference>
<dbReference type="InterPro" id="IPR013783">
    <property type="entry name" value="Ig-like_fold"/>
</dbReference>
<dbReference type="InterPro" id="IPR029021">
    <property type="entry name" value="Prot-tyrosine_phosphatase-like"/>
</dbReference>
<dbReference type="InterPro" id="IPR050348">
    <property type="entry name" value="Protein-Tyr_Phosphatase"/>
</dbReference>
<dbReference type="InterPro" id="IPR000242">
    <property type="entry name" value="PTP_cat"/>
</dbReference>
<dbReference type="InterPro" id="IPR024739">
    <property type="entry name" value="PTP_recept_N"/>
</dbReference>
<dbReference type="InterPro" id="IPR016335">
    <property type="entry name" value="Ptprc"/>
</dbReference>
<dbReference type="InterPro" id="IPR016130">
    <property type="entry name" value="Tyr_Pase_AS"/>
</dbReference>
<dbReference type="InterPro" id="IPR003595">
    <property type="entry name" value="Tyr_Pase_cat"/>
</dbReference>
<dbReference type="InterPro" id="IPR000387">
    <property type="entry name" value="Tyr_Pase_dom"/>
</dbReference>
<dbReference type="PANTHER" id="PTHR19134">
    <property type="entry name" value="RECEPTOR-TYPE TYROSINE-PROTEIN PHOSPHATASE"/>
    <property type="match status" value="1"/>
</dbReference>
<dbReference type="PANTHER" id="PTHR19134:SF539">
    <property type="entry name" value="RECEPTOR-TYPE TYROSINE-PROTEIN PHOSPHATASE C"/>
    <property type="match status" value="1"/>
</dbReference>
<dbReference type="Pfam" id="PF12567">
    <property type="entry name" value="CD45"/>
    <property type="match status" value="1"/>
</dbReference>
<dbReference type="Pfam" id="PF00041">
    <property type="entry name" value="fn3"/>
    <property type="match status" value="1"/>
</dbReference>
<dbReference type="Pfam" id="PF12453">
    <property type="entry name" value="PTP_N"/>
    <property type="match status" value="1"/>
</dbReference>
<dbReference type="Pfam" id="PF00102">
    <property type="entry name" value="Y_phosphatase"/>
    <property type="match status" value="2"/>
</dbReference>
<dbReference type="PIRSF" id="PIRSF002004">
    <property type="entry name" value="Leukocyte_common_antigen"/>
    <property type="match status" value="1"/>
</dbReference>
<dbReference type="PRINTS" id="PR00700">
    <property type="entry name" value="PRTYPHPHTASE"/>
</dbReference>
<dbReference type="SMART" id="SM00060">
    <property type="entry name" value="FN3"/>
    <property type="match status" value="2"/>
</dbReference>
<dbReference type="SMART" id="SM00194">
    <property type="entry name" value="PTPc"/>
    <property type="match status" value="2"/>
</dbReference>
<dbReference type="SMART" id="SM00404">
    <property type="entry name" value="PTPc_motif"/>
    <property type="match status" value="2"/>
</dbReference>
<dbReference type="SUPFAM" id="SSF52799">
    <property type="entry name" value="(Phosphotyrosine protein) phosphatases II"/>
    <property type="match status" value="2"/>
</dbReference>
<dbReference type="SUPFAM" id="SSF49265">
    <property type="entry name" value="Fibronectin type III"/>
    <property type="match status" value="1"/>
</dbReference>
<dbReference type="PROSITE" id="PS50853">
    <property type="entry name" value="FN3"/>
    <property type="match status" value="2"/>
</dbReference>
<dbReference type="PROSITE" id="PS00383">
    <property type="entry name" value="TYR_PHOSPHATASE_1"/>
    <property type="match status" value="1"/>
</dbReference>
<dbReference type="PROSITE" id="PS50056">
    <property type="entry name" value="TYR_PHOSPHATASE_2"/>
    <property type="match status" value="2"/>
</dbReference>
<dbReference type="PROSITE" id="PS50055">
    <property type="entry name" value="TYR_PHOSPHATASE_PTP"/>
    <property type="match status" value="2"/>
</dbReference>
<organism>
    <name type="scientific">Homo sapiens</name>
    <name type="common">Human</name>
    <dbReference type="NCBI Taxonomy" id="9606"/>
    <lineage>
        <taxon>Eukaryota</taxon>
        <taxon>Metazoa</taxon>
        <taxon>Chordata</taxon>
        <taxon>Craniata</taxon>
        <taxon>Vertebrata</taxon>
        <taxon>Euteleostomi</taxon>
        <taxon>Mammalia</taxon>
        <taxon>Eutheria</taxon>
        <taxon>Euarchontoglires</taxon>
        <taxon>Primates</taxon>
        <taxon>Haplorrhini</taxon>
        <taxon>Catarrhini</taxon>
        <taxon>Hominidae</taxon>
        <taxon>Homo</taxon>
    </lineage>
</organism>
<proteinExistence type="evidence at protein level"/>